<accession>P04626</accession>
<accession>B2RZG3</accession>
<accession>B4DHN3</accession>
<accession>Q14256</accession>
<accession>Q6LDV1</accession>
<accession>Q9UMK4</accession>
<accession>X5D2V5</accession>
<gene>
    <name type="primary">ERBB2</name>
    <name type="synonym">HER2</name>
    <name type="synonym">MLN19</name>
    <name type="synonym">NEU</name>
    <name type="synonym">NGL</name>
</gene>
<feature type="signal peptide" evidence="3">
    <location>
        <begin position="1"/>
        <end position="22"/>
    </location>
</feature>
<feature type="chain" id="PRO_0000016669" description="Receptor tyrosine-protein kinase erbB-2">
    <location>
        <begin position="23"/>
        <end position="1255"/>
    </location>
</feature>
<feature type="topological domain" description="Extracellular" evidence="3">
    <location>
        <begin position="23"/>
        <end position="652"/>
    </location>
</feature>
<feature type="transmembrane region" description="Helical" evidence="3">
    <location>
        <begin position="653"/>
        <end position="675"/>
    </location>
</feature>
<feature type="topological domain" description="Cytoplasmic" evidence="3">
    <location>
        <begin position="676"/>
        <end position="1255"/>
    </location>
</feature>
<feature type="domain" description="Protein kinase" evidence="4">
    <location>
        <begin position="720"/>
        <end position="987"/>
    </location>
</feature>
<feature type="region of interest" description="Required for interaction with KPNB1 and EEA1" evidence="16">
    <location>
        <begin position="676"/>
        <end position="689"/>
    </location>
</feature>
<feature type="region of interest" description="Disordered" evidence="6">
    <location>
        <begin position="1035"/>
        <end position="1179"/>
    </location>
</feature>
<feature type="region of interest" description="Interaction with PIK3C2B" evidence="42">
    <location>
        <begin position="1195"/>
        <end position="1197"/>
    </location>
</feature>
<feature type="region of interest" description="Disordered" evidence="6">
    <location>
        <begin position="1196"/>
        <end position="1255"/>
    </location>
</feature>
<feature type="short sequence motif" description="Nuclear localization signal">
    <location>
        <begin position="676"/>
        <end position="689"/>
    </location>
</feature>
<feature type="compositionally biased region" description="Pro residues" evidence="6">
    <location>
        <begin position="1146"/>
        <end position="1155"/>
    </location>
</feature>
<feature type="active site" description="Proton acceptor" evidence="4 5">
    <location>
        <position position="845"/>
    </location>
</feature>
<feature type="binding site" evidence="4">
    <location>
        <begin position="726"/>
        <end position="734"/>
    </location>
    <ligand>
        <name>ATP</name>
        <dbReference type="ChEBI" id="CHEBI:30616"/>
    </ligand>
</feature>
<feature type="binding site" evidence="4">
    <location>
        <position position="753"/>
    </location>
    <ligand>
        <name>ATP</name>
        <dbReference type="ChEBI" id="CHEBI:30616"/>
    </ligand>
</feature>
<feature type="modified residue" description="Phosphothreonine" evidence="61">
    <location>
        <position position="182"/>
    </location>
</feature>
<feature type="modified residue" description="Phosphotyrosine" evidence="43">
    <location>
        <position position="877"/>
    </location>
</feature>
<feature type="modified residue" description="Phosphoserine" evidence="57 58 60 61 62">
    <location>
        <position position="1054"/>
    </location>
</feature>
<feature type="modified residue" description="Phosphoserine" evidence="1">
    <location>
        <position position="1078"/>
    </location>
</feature>
<feature type="modified residue" description="Phosphoserine" evidence="61">
    <location>
        <position position="1083"/>
    </location>
</feature>
<feature type="modified residue" description="Phosphoserine" evidence="59">
    <location>
        <position position="1107"/>
    </location>
</feature>
<feature type="modified residue" description="Phosphotyrosine" evidence="30">
    <location>
        <position position="1112"/>
    </location>
</feature>
<feature type="modified residue" description="Phosphotyrosine" evidence="30">
    <location>
        <position position="1139"/>
    </location>
</feature>
<feature type="modified residue" description="Phosphoserine" evidence="62">
    <location>
        <position position="1151"/>
    </location>
</feature>
<feature type="modified residue" description="Phosphothreonine" evidence="61">
    <location>
        <position position="1166"/>
    </location>
</feature>
<feature type="modified residue" description="Phosphotyrosine" evidence="30 43">
    <location>
        <position position="1196"/>
    </location>
</feature>
<feature type="modified residue" description="Phosphotyrosine; by autocatalysis" evidence="20 30 56">
    <location>
        <position position="1248"/>
    </location>
</feature>
<feature type="glycosylation site" description="N-linked (GlcNAc...) asparagine" evidence="24 46 49">
    <location>
        <position position="68"/>
    </location>
</feature>
<feature type="glycosylation site" description="N-linked (GlcNAc...) asparagine" evidence="3">
    <location>
        <position position="124"/>
    </location>
</feature>
<feature type="glycosylation site" description="N-linked (GlcNAc...) asparagine" evidence="3 44 45 46 50">
    <location>
        <position position="187"/>
    </location>
</feature>
<feature type="glycosylation site" description="N-linked (GlcNAc...) asparagine" evidence="11 22 24 44 45 46 49 50">
    <location>
        <position position="259"/>
    </location>
</feature>
<feature type="glycosylation site" description="N-linked (GlcNAc...) asparagine" evidence="11 22 45">
    <location>
        <position position="530"/>
    </location>
</feature>
<feature type="glycosylation site" description="N-linked (GlcNAc...) asparagine" evidence="24 49">
    <location>
        <position position="571"/>
    </location>
</feature>
<feature type="glycosylation site" description="N-linked (GlcNAc...) asparagine" evidence="3">
    <location>
        <position position="629"/>
    </location>
</feature>
<feature type="disulfide bond" evidence="44 45 46 47 48 49 50 51 52 53 54">
    <location>
        <begin position="26"/>
        <end position="53"/>
    </location>
</feature>
<feature type="disulfide bond" evidence="44 45 46 47 48 49 50 51 52 53 54">
    <location>
        <begin position="162"/>
        <end position="192"/>
    </location>
</feature>
<feature type="disulfide bond" evidence="44 45 46 47 48 49 50 51 52 53 54">
    <location>
        <begin position="195"/>
        <end position="204"/>
    </location>
</feature>
<feature type="disulfide bond" evidence="44 45 46 47 48 49 50 51 52 53 54">
    <location>
        <begin position="199"/>
        <end position="212"/>
    </location>
</feature>
<feature type="disulfide bond" evidence="44 45 46 47 49 50 51 52">
    <location>
        <begin position="220"/>
        <end position="227"/>
    </location>
</feature>
<feature type="disulfide bond" evidence="44 45 46 47 49 50 51 52">
    <location>
        <begin position="224"/>
        <end position="235"/>
    </location>
</feature>
<feature type="disulfide bond" evidence="44 45 46 47 49 50 51 52">
    <location>
        <begin position="236"/>
        <end position="244"/>
    </location>
</feature>
<feature type="disulfide bond" evidence="44 45 46 47 49 50 51 52">
    <location>
        <begin position="240"/>
        <end position="252"/>
    </location>
</feature>
<feature type="disulfide bond" evidence="44 45 46 47 49 50 51 52">
    <location>
        <begin position="255"/>
        <end position="264"/>
    </location>
</feature>
<feature type="disulfide bond" evidence="44 45 46 47 49 50 51 52">
    <location>
        <begin position="268"/>
        <end position="295"/>
    </location>
</feature>
<feature type="disulfide bond" evidence="44 45 46 47 49 50 51 52">
    <location>
        <begin position="299"/>
        <end position="311"/>
    </location>
</feature>
<feature type="disulfide bond" evidence="44 45 46 47 49 50 51 52">
    <location>
        <begin position="315"/>
        <end position="331"/>
    </location>
</feature>
<feature type="disulfide bond" evidence="44 45 46 47 49 50 51 52">
    <location>
        <begin position="334"/>
        <end position="338"/>
    </location>
</feature>
<feature type="disulfide bond" evidence="44 45 46 47 49 50 51 52">
    <location>
        <begin position="342"/>
        <end position="367"/>
    </location>
</feature>
<feature type="disulfide bond" evidence="44 45 46 47 49 50 51 52">
    <location>
        <begin position="475"/>
        <end position="504"/>
    </location>
</feature>
<feature type="disulfide bond" evidence="44 45 46 47 49 50 51 52">
    <location>
        <begin position="511"/>
        <end position="520"/>
    </location>
</feature>
<feature type="disulfide bond" evidence="44 45 46 47 49 50 51 52">
    <location>
        <begin position="515"/>
        <end position="528"/>
    </location>
</feature>
<feature type="disulfide bond" evidence="44 45 47 49 50 51 52 55">
    <location>
        <begin position="531"/>
        <end position="540"/>
    </location>
</feature>
<feature type="disulfide bond" evidence="44 45 47 49 50 51 52 55">
    <location>
        <begin position="544"/>
        <end position="560"/>
    </location>
</feature>
<feature type="disulfide bond" evidence="44 45 47 49 50 51 52 55">
    <location>
        <begin position="563"/>
        <end position="576"/>
    </location>
</feature>
<feature type="disulfide bond" evidence="44 45 47 49 50 51 52 55">
    <location>
        <begin position="567"/>
        <end position="584"/>
    </location>
</feature>
<feature type="disulfide bond" evidence="44 45 47 49 50 55">
    <location>
        <begin position="587"/>
        <end position="596"/>
    </location>
</feature>
<feature type="disulfide bond" evidence="44 47 50">
    <location>
        <begin position="600"/>
        <end position="623"/>
    </location>
</feature>
<feature type="disulfide bond" evidence="50">
    <location>
        <begin position="626"/>
        <end position="634"/>
    </location>
</feature>
<feature type="disulfide bond" evidence="50">
    <location>
        <begin position="630"/>
        <end position="642"/>
    </location>
</feature>
<feature type="splice variant" id="VSP_039250" description="In isoform 3." evidence="42">
    <location>
        <begin position="1"/>
        <end position="686"/>
    </location>
</feature>
<feature type="splice variant" id="VSP_039249" description="In isoform 2." evidence="42">
    <location>
        <begin position="1"/>
        <end position="610"/>
    </location>
</feature>
<feature type="splice variant" id="VSP_054787" description="In isoform 5." evidence="42">
    <location>
        <begin position="1"/>
        <end position="30"/>
    </location>
</feature>
<feature type="splice variant" id="VSP_039248" description="In isoform 4." evidence="41">
    <original>MELAALCRWGLLLALLPPGAAST</original>
    <variation>MPRGSWKP</variation>
    <location>
        <begin position="1"/>
        <end position="23"/>
    </location>
</feature>
<feature type="splice variant" id="VSP_055902" description="In isoform 6." evidence="40">
    <location>
        <begin position="633"/>
        <end position="648"/>
    </location>
</feature>
<feature type="splice variant" id="VSP_055903" description="In isoform 6." evidence="40">
    <original>AYVMAGVGSPYVSRLLGICLTSTVQLVTQLMPYGCLLDHVRENRGRLGSQDLLNWCMQIAKGMSYLEDVRLVHRDLAARNVLVKSPNHVKITDFGLARLLDIDETEYHADGGK</original>
    <variation>TISNLFSNFAPRGPSACCEPTCWCHSGKGQDSLPREEWGRQRRFCLWGCRGEPRVLDTPGRSCPSAPPSSCLQPSLRQPLLLGPGPTRAGGSTQHLQRDTYGREPRVPGSGRASVNQKAKSAEALMCPQGAGKA</variation>
    <location>
        <begin position="771"/>
        <end position="883"/>
    </location>
</feature>
<feature type="splice variant" id="VSP_055904" description="In isoform 6." evidence="40">
    <location>
        <begin position="884"/>
        <end position="1255"/>
    </location>
</feature>
<feature type="sequence variant" id="VAR_016317" description="In dbSNP:rs4252633." evidence="39">
    <original>W</original>
    <variation>C</variation>
    <location>
        <position position="452"/>
    </location>
</feature>
<feature type="sequence variant" id="VAR_004077" description="In allele B3; dbSNP:rs1801201." evidence="19 37">
    <original>I</original>
    <variation>V</variation>
    <location>
        <position position="654"/>
    </location>
</feature>
<feature type="sequence variant" id="VAR_004078" description="In allele B2 and allele B3; dbSNP:rs1136201." evidence="19 37 39">
    <original>I</original>
    <variation>V</variation>
    <location>
        <position position="655"/>
    </location>
</feature>
<feature type="sequence variant" id="VAR_086107" description="In VSCN2; almost complete loss of ERBB2 and ERBB3 phosphorylation in the presence or in the absence of NRG1 stimulation, suggesting alteration of downstream signaling; does not affect the subcellular localization at the cell membrane; dbSNP:rs2145813505." evidence="34">
    <original>A</original>
    <variation>V</variation>
    <location>
        <position position="710"/>
    </location>
</feature>
<feature type="sequence variant" id="VAR_055432" description="In LNCR; uncertain significance; somatic mutation; dbSNP:rs121913469." evidence="15">
    <original>L</original>
    <variation>P</variation>
    <location>
        <position position="755"/>
    </location>
</feature>
<feature type="sequence variant" id="VAR_042097" description="In dbSNP:rs56366519." evidence="19">
    <original>L</original>
    <variation>S</variation>
    <location>
        <position position="768"/>
    </location>
</feature>
<feature type="sequence variant" id="VAR_055433" description="In LNCR; uncertain significance; somatic mutation." evidence="15">
    <original>M</original>
    <variation>MAYVM</variation>
    <location>
        <position position="774"/>
    </location>
</feature>
<feature type="sequence variant" id="VAR_042098" description="In GASC; uncertain significance; somatic mutation; dbSNP:rs28933369." evidence="15 19">
    <original>G</original>
    <variation>S</variation>
    <location>
        <position position="776"/>
    </location>
</feature>
<feature type="sequence variant" id="VAR_055434" description="In LNCR; uncertain significance; somatic mutation." evidence="15">
    <original>S</original>
    <variation>SVGS</variation>
    <location>
        <position position="779"/>
    </location>
</feature>
<feature type="sequence variant" id="VAR_042099" description="In OC; uncertain significance; somatic mutation; dbSNP:rs28933370." evidence="15 19">
    <original>N</original>
    <variation>S</variation>
    <location>
        <position position="857"/>
    </location>
</feature>
<feature type="sequence variant" id="VAR_055435" description="In GLM; uncertain significance; somatic mutation; dbSNP:rs28933368." evidence="15">
    <original>E</original>
    <variation>K</variation>
    <location>
        <position position="914"/>
    </location>
</feature>
<feature type="sequence variant" id="VAR_016318" description="In dbSNP:rs1058808." evidence="19 31 38 39">
    <original>P</original>
    <variation>A</variation>
    <location>
        <position position="1170"/>
    </location>
</feature>
<feature type="sequence variant" id="VAR_042100" description="In dbSNP:rs55943169." evidence="19">
    <original>A</original>
    <variation>D</variation>
    <location>
        <position position="1216"/>
    </location>
</feature>
<feature type="mutagenesis site" description="Reduces dimerization with ERBB3." evidence="11">
    <original>LH</original>
    <variation>AA</variation>
    <location>
        <begin position="317"/>
        <end position="318"/>
    </location>
</feature>
<feature type="mutagenesis site" description="Prevents synthesis of isoform 2." evidence="17">
    <original>M</original>
    <variation>A</variation>
    <location>
        <position position="611"/>
    </location>
</feature>
<feature type="mutagenesis site" description="Prevents synthesis of isoform 3." evidence="17">
    <original>M</original>
    <variation>A</variation>
    <location>
        <position position="687"/>
    </location>
</feature>
<feature type="mutagenesis site" description="No effect on isoform production." evidence="17">
    <original>M</original>
    <variation>A</variation>
    <location>
        <position position="706"/>
    </location>
</feature>
<feature type="mutagenesis site" description="No effect on isoform production." evidence="17">
    <original>M</original>
    <variation>A</variation>
    <location>
        <position position="712"/>
    </location>
</feature>
<feature type="strand" evidence="78">
    <location>
        <begin position="25"/>
        <end position="27"/>
    </location>
</feature>
<feature type="helix" evidence="78">
    <location>
        <begin position="39"/>
        <end position="50"/>
    </location>
</feature>
<feature type="strand" evidence="78">
    <location>
        <begin position="55"/>
        <end position="64"/>
    </location>
</feature>
<feature type="helix" evidence="78">
    <location>
        <begin position="72"/>
        <end position="74"/>
    </location>
</feature>
<feature type="strand" evidence="78">
    <location>
        <begin position="79"/>
        <end position="82"/>
    </location>
</feature>
<feature type="strand" evidence="78">
    <location>
        <begin position="84"/>
        <end position="88"/>
    </location>
</feature>
<feature type="strand" evidence="68">
    <location>
        <begin position="92"/>
        <end position="95"/>
    </location>
</feature>
<feature type="turn" evidence="78">
    <location>
        <begin position="109"/>
        <end position="111"/>
    </location>
</feature>
<feature type="strand" evidence="78">
    <location>
        <begin position="112"/>
        <end position="117"/>
    </location>
</feature>
<feature type="strand" evidence="79">
    <location>
        <begin position="123"/>
        <end position="125"/>
    </location>
</feature>
<feature type="turn" evidence="68">
    <location>
        <begin position="130"/>
        <end position="132"/>
    </location>
</feature>
<feature type="strand" evidence="68">
    <location>
        <begin position="139"/>
        <end position="141"/>
    </location>
</feature>
<feature type="strand" evidence="65">
    <location>
        <begin position="147"/>
        <end position="150"/>
    </location>
</feature>
<feature type="strand" evidence="78">
    <location>
        <begin position="152"/>
        <end position="156"/>
    </location>
</feature>
<feature type="helix" evidence="78">
    <location>
        <begin position="164"/>
        <end position="166"/>
    </location>
</feature>
<feature type="helix" evidence="78">
    <location>
        <begin position="169"/>
        <end position="171"/>
    </location>
</feature>
<feature type="helix" evidence="64">
    <location>
        <begin position="175"/>
        <end position="177"/>
    </location>
</feature>
<feature type="strand" evidence="78">
    <location>
        <begin position="182"/>
        <end position="184"/>
    </location>
</feature>
<feature type="helix" evidence="78">
    <location>
        <begin position="200"/>
        <end position="202"/>
    </location>
</feature>
<feature type="strand" evidence="78">
    <location>
        <begin position="204"/>
        <end position="208"/>
    </location>
</feature>
<feature type="helix" evidence="78">
    <location>
        <begin position="209"/>
        <end position="211"/>
    </location>
</feature>
<feature type="strand" evidence="64">
    <location>
        <begin position="217"/>
        <end position="219"/>
    </location>
</feature>
<feature type="helix" evidence="74">
    <location>
        <begin position="221"/>
        <end position="223"/>
    </location>
</feature>
<feature type="strand" evidence="74">
    <location>
        <begin position="227"/>
        <end position="231"/>
    </location>
</feature>
<feature type="helix" evidence="74">
    <location>
        <begin position="232"/>
        <end position="234"/>
    </location>
</feature>
<feature type="strand" evidence="74">
    <location>
        <begin position="240"/>
        <end position="248"/>
    </location>
</feature>
<feature type="strand" evidence="74">
    <location>
        <begin position="251"/>
        <end position="260"/>
    </location>
</feature>
<feature type="strand" evidence="74">
    <location>
        <begin position="263"/>
        <end position="267"/>
    </location>
</feature>
<feature type="strand" evidence="74">
    <location>
        <begin position="271"/>
        <end position="274"/>
    </location>
</feature>
<feature type="turn" evidence="74">
    <location>
        <begin position="276"/>
        <end position="278"/>
    </location>
</feature>
<feature type="strand" evidence="74">
    <location>
        <begin position="281"/>
        <end position="283"/>
    </location>
</feature>
<feature type="turn" evidence="75">
    <location>
        <begin position="284"/>
        <end position="286"/>
    </location>
</feature>
<feature type="strand" evidence="74">
    <location>
        <begin position="289"/>
        <end position="291"/>
    </location>
</feature>
<feature type="strand" evidence="74">
    <location>
        <begin position="294"/>
        <end position="298"/>
    </location>
</feature>
<feature type="strand" evidence="64">
    <location>
        <begin position="303"/>
        <end position="305"/>
    </location>
</feature>
<feature type="strand" evidence="74">
    <location>
        <begin position="309"/>
        <end position="314"/>
    </location>
</feature>
<feature type="strand" evidence="74">
    <location>
        <begin position="319"/>
        <end position="323"/>
    </location>
</feature>
<feature type="strand" evidence="81">
    <location>
        <begin position="325"/>
        <end position="327"/>
    </location>
</feature>
<feature type="strand" evidence="74">
    <location>
        <begin position="329"/>
        <end position="333"/>
    </location>
</feature>
<feature type="strand" evidence="65">
    <location>
        <begin position="335"/>
        <end position="337"/>
    </location>
</feature>
<feature type="helix" evidence="74">
    <location>
        <begin position="348"/>
        <end position="350"/>
    </location>
</feature>
<feature type="turn" evidence="74">
    <location>
        <begin position="358"/>
        <end position="360"/>
    </location>
</feature>
<feature type="helix" evidence="74">
    <location>
        <begin position="361"/>
        <end position="364"/>
    </location>
</feature>
<feature type="strand" evidence="74">
    <location>
        <begin position="368"/>
        <end position="376"/>
    </location>
</feature>
<feature type="helix" evidence="74">
    <location>
        <begin position="378"/>
        <end position="382"/>
    </location>
</feature>
<feature type="helix" evidence="74">
    <location>
        <begin position="385"/>
        <end position="387"/>
    </location>
</feature>
<feature type="helix" evidence="74">
    <location>
        <begin position="394"/>
        <end position="400"/>
    </location>
</feature>
<feature type="strand" evidence="74">
    <location>
        <begin position="405"/>
        <end position="408"/>
    </location>
</feature>
<feature type="strand" evidence="74">
    <location>
        <begin position="410"/>
        <end position="413"/>
    </location>
</feature>
<feature type="strand" evidence="79">
    <location>
        <begin position="417"/>
        <end position="421"/>
    </location>
</feature>
<feature type="helix" evidence="74">
    <location>
        <begin position="423"/>
        <end position="425"/>
    </location>
</feature>
<feature type="strand" evidence="72">
    <location>
        <begin position="430"/>
        <end position="435"/>
    </location>
</feature>
<feature type="turn" evidence="74">
    <location>
        <begin position="438"/>
        <end position="440"/>
    </location>
</feature>
<feature type="strand" evidence="74">
    <location>
        <begin position="441"/>
        <end position="447"/>
    </location>
</feature>
<feature type="strand" evidence="74">
    <location>
        <begin position="463"/>
        <end position="469"/>
    </location>
</feature>
<feature type="turn" evidence="82">
    <location>
        <begin position="476"/>
        <end position="479"/>
    </location>
</feature>
<feature type="helix" evidence="74">
    <location>
        <begin position="482"/>
        <end position="485"/>
    </location>
</feature>
<feature type="strand" evidence="81">
    <location>
        <begin position="488"/>
        <end position="490"/>
    </location>
</feature>
<feature type="strand" evidence="74">
    <location>
        <begin position="493"/>
        <end position="499"/>
    </location>
</feature>
<feature type="helix" evidence="74">
    <location>
        <begin position="501"/>
        <end position="506"/>
    </location>
</feature>
<feature type="turn" evidence="69">
    <location>
        <begin position="507"/>
        <end position="509"/>
    </location>
</feature>
<feature type="helix" evidence="74">
    <location>
        <begin position="516"/>
        <end position="518"/>
    </location>
</feature>
<feature type="strand" evidence="74">
    <location>
        <begin position="520"/>
        <end position="524"/>
    </location>
</feature>
<feature type="helix" evidence="65">
    <location>
        <begin position="525"/>
        <end position="527"/>
    </location>
</feature>
<feature type="strand" evidence="76">
    <location>
        <begin position="532"/>
        <end position="536"/>
    </location>
</feature>
<feature type="strand" evidence="76">
    <location>
        <begin position="539"/>
        <end position="542"/>
    </location>
</feature>
<feature type="strand" evidence="76">
    <location>
        <begin position="545"/>
        <end position="551"/>
    </location>
</feature>
<feature type="strand" evidence="76">
    <location>
        <begin position="553"/>
        <end position="556"/>
    </location>
</feature>
<feature type="strand" evidence="76">
    <location>
        <begin position="559"/>
        <end position="562"/>
    </location>
</feature>
<feature type="strand" evidence="73">
    <location>
        <begin position="565"/>
        <end position="567"/>
    </location>
</feature>
<feature type="strand" evidence="76">
    <location>
        <begin position="571"/>
        <end position="573"/>
    </location>
</feature>
<feature type="strand" evidence="76">
    <location>
        <begin position="575"/>
        <end position="580"/>
    </location>
</feature>
<feature type="strand" evidence="76">
    <location>
        <begin position="583"/>
        <end position="592"/>
    </location>
</feature>
<feature type="strand" evidence="76">
    <location>
        <begin position="595"/>
        <end position="599"/>
    </location>
</feature>
<feature type="strand" evidence="75">
    <location>
        <begin position="602"/>
        <end position="604"/>
    </location>
</feature>
<feature type="strand" evidence="79">
    <location>
        <begin position="605"/>
        <end position="608"/>
    </location>
</feature>
<feature type="strand" evidence="77">
    <location>
        <begin position="613"/>
        <end position="616"/>
    </location>
</feature>
<feature type="strand" evidence="64">
    <location>
        <begin position="621"/>
        <end position="625"/>
    </location>
</feature>
<feature type="strand" evidence="75">
    <location>
        <begin position="630"/>
        <end position="632"/>
    </location>
</feature>
<feature type="strand" evidence="75">
    <location>
        <begin position="635"/>
        <end position="637"/>
    </location>
</feature>
<feature type="helix" evidence="66">
    <location>
        <begin position="651"/>
        <end position="678"/>
    </location>
</feature>
<feature type="helix" evidence="67">
    <location>
        <begin position="684"/>
        <end position="690"/>
    </location>
</feature>
<feature type="helix" evidence="67">
    <location>
        <begin position="691"/>
        <end position="697"/>
    </location>
</feature>
<feature type="helix" evidence="80">
    <location>
        <begin position="717"/>
        <end position="719"/>
    </location>
</feature>
<feature type="strand" evidence="80">
    <location>
        <begin position="720"/>
        <end position="729"/>
    </location>
</feature>
<feature type="strand" evidence="80">
    <location>
        <begin position="732"/>
        <end position="739"/>
    </location>
</feature>
<feature type="strand" evidence="80">
    <location>
        <begin position="748"/>
        <end position="755"/>
    </location>
</feature>
<feature type="turn" evidence="71">
    <location>
        <begin position="762"/>
        <end position="765"/>
    </location>
</feature>
<feature type="helix" evidence="80">
    <location>
        <begin position="770"/>
        <end position="775"/>
    </location>
</feature>
<feature type="strand" evidence="80">
    <location>
        <begin position="787"/>
        <end position="799"/>
    </location>
</feature>
<feature type="helix" evidence="80">
    <location>
        <begin position="806"/>
        <end position="813"/>
    </location>
</feature>
<feature type="helix" evidence="80">
    <location>
        <begin position="814"/>
        <end position="816"/>
    </location>
</feature>
<feature type="helix" evidence="80">
    <location>
        <begin position="819"/>
        <end position="838"/>
    </location>
</feature>
<feature type="helix" evidence="80">
    <location>
        <begin position="848"/>
        <end position="850"/>
    </location>
</feature>
<feature type="strand" evidence="80">
    <location>
        <begin position="851"/>
        <end position="855"/>
    </location>
</feature>
<feature type="strand" evidence="80">
    <location>
        <begin position="858"/>
        <end position="861"/>
    </location>
</feature>
<feature type="helix" evidence="80">
    <location>
        <begin position="866"/>
        <end position="870"/>
    </location>
</feature>
<feature type="helix" evidence="80">
    <location>
        <begin position="874"/>
        <end position="876"/>
    </location>
</feature>
<feature type="helix" evidence="80">
    <location>
        <begin position="878"/>
        <end position="880"/>
    </location>
</feature>
<feature type="helix" evidence="80">
    <location>
        <begin position="886"/>
        <end position="888"/>
    </location>
</feature>
<feature type="helix" evidence="80">
    <location>
        <begin position="891"/>
        <end position="896"/>
    </location>
</feature>
<feature type="helix" evidence="80">
    <location>
        <begin position="901"/>
        <end position="916"/>
    </location>
</feature>
<feature type="turn" evidence="80">
    <location>
        <begin position="922"/>
        <end position="925"/>
    </location>
</feature>
<feature type="helix" evidence="80">
    <location>
        <begin position="928"/>
        <end position="930"/>
    </location>
</feature>
<feature type="helix" evidence="80">
    <location>
        <begin position="931"/>
        <end position="936"/>
    </location>
</feature>
<feature type="helix" evidence="80">
    <location>
        <begin position="949"/>
        <end position="958"/>
    </location>
</feature>
<feature type="helix" evidence="80">
    <location>
        <begin position="963"/>
        <end position="965"/>
    </location>
</feature>
<feature type="helix" evidence="80">
    <location>
        <begin position="969"/>
        <end position="980"/>
    </location>
</feature>
<feature type="helix" evidence="80">
    <location>
        <begin position="983"/>
        <end position="985"/>
    </location>
</feature>
<feature type="helix" evidence="70">
    <location>
        <begin position="989"/>
        <end position="992"/>
    </location>
</feature>
<feature type="helix" evidence="70">
    <location>
        <begin position="1003"/>
        <end position="1007"/>
    </location>
</feature>
<feature type="turn" evidence="80">
    <location>
        <begin position="1008"/>
        <end position="1011"/>
    </location>
</feature>
<feature type="helix" evidence="80">
    <location>
        <begin position="1020"/>
        <end position="1022"/>
    </location>
</feature>
<feature type="strand" evidence="63">
    <location>
        <begin position="1140"/>
        <end position="1142"/>
    </location>
</feature>
<keyword id="KW-0002">3D-structure</keyword>
<keyword id="KW-0010">Activator</keyword>
<keyword id="KW-0024">Alternative initiation</keyword>
<keyword id="KW-0025">Alternative splicing</keyword>
<keyword id="KW-0067">ATP-binding</keyword>
<keyword id="KW-1003">Cell membrane</keyword>
<keyword id="KW-0966">Cell projection</keyword>
<keyword id="KW-0160">Chromosomal rearrangement</keyword>
<keyword id="KW-0963">Cytoplasm</keyword>
<keyword id="KW-0225">Disease variant</keyword>
<keyword id="KW-1015">Disulfide bond</keyword>
<keyword id="KW-0967">Endosome</keyword>
<keyword id="KW-0325">Glycoprotein</keyword>
<keyword id="KW-0418">Kinase</keyword>
<keyword id="KW-0472">Membrane</keyword>
<keyword id="KW-0547">Nucleotide-binding</keyword>
<keyword id="KW-0539">Nucleus</keyword>
<keyword id="KW-0597">Phosphoprotein</keyword>
<keyword id="KW-1267">Proteomics identification</keyword>
<keyword id="KW-0675">Receptor</keyword>
<keyword id="KW-1185">Reference proteome</keyword>
<keyword id="KW-0732">Signal</keyword>
<keyword id="KW-0804">Transcription</keyword>
<keyword id="KW-0805">Transcription regulation</keyword>
<keyword id="KW-0808">Transferase</keyword>
<keyword id="KW-0812">Transmembrane</keyword>
<keyword id="KW-1133">Transmembrane helix</keyword>
<keyword id="KW-0829">Tyrosine-protein kinase</keyword>
<sequence length="1255" mass="137910">MELAALCRWGLLLALLPPGAASTQVCTGTDMKLRLPASPETHLDMLRHLYQGCQVVQGNLELTYLPTNASLSFLQDIQEVQGYVLIAHNQVRQVPLQRLRIVRGTQLFEDNYALAVLDNGDPLNNTTPVTGASPGGLRELQLRSLTEILKGGVLIQRNPQLCYQDTILWKDIFHKNNQLALTLIDTNRSRACHPCSPMCKGSRCWGESSEDCQSLTRTVCAGGCARCKGPLPTDCCHEQCAAGCTGPKHSDCLACLHFNHSGICELHCPALVTYNTDTFESMPNPEGRYTFGASCVTACPYNYLSTDVGSCTLVCPLHNQEVTAEDGTQRCEKCSKPCARVCYGLGMEHLREVRAVTSANIQEFAGCKKIFGSLAFLPESFDGDPASNTAPLQPEQLQVFETLEEITGYLYISAWPDSLPDLSVFQNLQVIRGRILHNGAYSLTLQGLGISWLGLRSLRELGSGLALIHHNTHLCFVHTVPWDQLFRNPHQALLHTANRPEDECVGEGLACHQLCARGHCWGPGPTQCVNCSQFLRGQECVEECRVLQGLPREYVNARHCLPCHPECQPQNGSVTCFGPEADQCVACAHYKDPPFCVARCPSGVKPDLSYMPIWKFPDEEGACQPCPINCTHSCVDLDDKGCPAEQRASPLTSIISAVVGILLVVVLGVVFGILIKRRQQKIRKYTMRRLLQETELVEPLTPSGAMPNQAQMRILKETELRKVKVLGSGAFGTVYKGIWIPDGENVKIPVAIKVLRENTSPKANKEILDEAYVMAGVGSPYVSRLLGICLTSTVQLVTQLMPYGCLLDHVRENRGRLGSQDLLNWCMQIAKGMSYLEDVRLVHRDLAARNVLVKSPNHVKITDFGLARLLDIDETEYHADGGKVPIKWMALESILRRRFTHQSDVWSYGVTVWELMTFGAKPYDGIPAREIPDLLEKGERLPQPPICTIDVYMIMVKCWMIDSECRPRFRELVSEFSRMARDPQRFVVIQNEDLGPASPLDSTFYRSLLEDDDMGDLVDAEEYLVPQQGFFCPDPAPGAGGMVHHRHRSSSTRSGGGDLTLGLEPSEEEAPRSPLAPSEGAGSDVFDGDLGMGAAKGLQSLPTHDPSPLQRYSEDPTVPLPSETDGYVAPLTCSPQPEYVNQPDVRPQPPSPREGPLPAARPAGATLERPKTLSPGKNGVVKDVFAFGGAVENPEYLTPQGGAAPQPHPPPAFSPAFDNLYYWDQDPPERGAPPSTFKGTPTAENPEYLGLDVPV</sequence>
<protein>
    <recommendedName>
        <fullName>Receptor tyrosine-protein kinase erbB-2</fullName>
        <ecNumber>2.7.10.1</ecNumber>
    </recommendedName>
    <alternativeName>
        <fullName>Metastatic lymph node gene 19 protein</fullName>
        <shortName>MLN 19</shortName>
    </alternativeName>
    <alternativeName>
        <fullName>Proto-oncogene Neu</fullName>
    </alternativeName>
    <alternativeName>
        <fullName>Proto-oncogene c-ErbB-2</fullName>
    </alternativeName>
    <alternativeName>
        <fullName>Tyrosine kinase-type cell surface receptor HER2</fullName>
    </alternativeName>
    <alternativeName>
        <fullName>p185erbB2</fullName>
    </alternativeName>
    <cdAntigenName>CD340</cdAntigenName>
</protein>
<reference key="1">
    <citation type="journal article" date="1986" name="Nature">
        <title>Similarity of protein encoded by the human c-erb-B-2 gene to epidermal growth factor receptor.</title>
        <authorList>
            <person name="Yamamoto T."/>
            <person name="Ikawa S."/>
            <person name="Akiyama T."/>
            <person name="Semba K."/>
            <person name="Nomura N."/>
            <person name="Miyajima N."/>
            <person name="Saito T."/>
            <person name="Toyoshima K."/>
        </authorList>
    </citation>
    <scope>NUCLEOTIDE SEQUENCE [MRNA] (ISOFORM 1)</scope>
</reference>
<reference key="2">
    <citation type="journal article" date="1985" name="Science">
        <title>Tyrosine kinase receptor with extensive homology to EGF receptor shares chromosomal location with neu oncogene.</title>
        <authorList>
            <person name="Coussens L."/>
            <person name="Yang-Feng T.L."/>
            <person name="Liao Y.C."/>
            <person name="Chen E."/>
            <person name="Gray A."/>
            <person name="McGrath J."/>
            <person name="Seeburg P.H."/>
            <person name="Libermann T.A."/>
            <person name="Schlessinger J."/>
            <person name="Francke U."/>
            <person name="Levinson A."/>
            <person name="Ullrich A."/>
        </authorList>
    </citation>
    <scope>NUCLEOTIDE SEQUENCE [GENOMIC DNA / MRNA] (ISOFORM 1)</scope>
    <scope>VARIANT ALA-1170</scope>
</reference>
<reference key="3">
    <citation type="submission" date="2002-12" db="EMBL/GenBank/DDBJ databases">
        <authorList>
            <consortium name="NIEHS SNPs program"/>
        </authorList>
    </citation>
    <scope>NUCLEOTIDE SEQUENCE [GENOMIC DNA]</scope>
    <scope>VARIANTS CYS-452; VAL-655 AND ALA-1170</scope>
</reference>
<reference key="4">
    <citation type="submission" date="2007-10" db="EMBL/GenBank/DDBJ databases">
        <title>NEDO human cDNA sequencing project focused on splicing variants.</title>
        <authorList>
            <person name="Wakamatsu A."/>
            <person name="Yamamoto J."/>
            <person name="Kimura K."/>
            <person name="Ishii S."/>
            <person name="Watanabe K."/>
            <person name="Sugiyama A."/>
            <person name="Murakawa K."/>
            <person name="Kaida T."/>
            <person name="Tsuchiya K."/>
            <person name="Fukuzumi Y."/>
            <person name="Kumagai A."/>
            <person name="Oishi Y."/>
            <person name="Yamamoto S."/>
            <person name="Ono Y."/>
            <person name="Komori Y."/>
            <person name="Yamazaki M."/>
            <person name="Kisu Y."/>
            <person name="Nishikawa T."/>
            <person name="Sugano S."/>
            <person name="Nomura N."/>
            <person name="Isogai T."/>
        </authorList>
    </citation>
    <scope>NUCLEOTIDE SEQUENCE [LARGE SCALE MRNA] (ISOFORM 4)</scope>
    <source>
        <tissue>Brain</tissue>
    </source>
</reference>
<reference key="5">
    <citation type="submission" date="2005-07" db="EMBL/GenBank/DDBJ databases">
        <authorList>
            <person name="Mural R.J."/>
            <person name="Istrail S."/>
            <person name="Sutton G.G."/>
            <person name="Florea L."/>
            <person name="Halpern A.L."/>
            <person name="Mobarry C.M."/>
            <person name="Lippert R."/>
            <person name="Walenz B."/>
            <person name="Shatkay H."/>
            <person name="Dew I."/>
            <person name="Miller J.R."/>
            <person name="Flanigan M.J."/>
            <person name="Edwards N.J."/>
            <person name="Bolanos R."/>
            <person name="Fasulo D."/>
            <person name="Halldorsson B.V."/>
            <person name="Hannenhalli S."/>
            <person name="Turner R."/>
            <person name="Yooseph S."/>
            <person name="Lu F."/>
            <person name="Nusskern D.R."/>
            <person name="Shue B.C."/>
            <person name="Zheng X.H."/>
            <person name="Zhong F."/>
            <person name="Delcher A.L."/>
            <person name="Huson D.H."/>
            <person name="Kravitz S.A."/>
            <person name="Mouchard L."/>
            <person name="Reinert K."/>
            <person name="Remington K.A."/>
            <person name="Clark A.G."/>
            <person name="Waterman M.S."/>
            <person name="Eichler E.E."/>
            <person name="Adams M.D."/>
            <person name="Hunkapiller M.W."/>
            <person name="Myers E.W."/>
            <person name="Venter J.C."/>
        </authorList>
    </citation>
    <scope>NUCLEOTIDE SEQUENCE [LARGE SCALE GENOMIC DNA]</scope>
</reference>
<reference key="6">
    <citation type="journal article" date="2004" name="Genome Res.">
        <title>The status, quality, and expansion of the NIH full-length cDNA project: the Mammalian Gene Collection (MGC).</title>
        <authorList>
            <consortium name="The MGC Project Team"/>
        </authorList>
    </citation>
    <scope>NUCLEOTIDE SEQUENCE [LARGE SCALE MRNA] (ISOFORM 1)</scope>
</reference>
<reference key="7">
    <citation type="journal article" date="1987" name="Mol. Cell. Biol.">
        <title>Human HER2 (neu) promoter: evidence for multiple mechanisms for transcriptional initiation.</title>
        <authorList>
            <person name="Tal M."/>
            <person name="King C.R."/>
            <person name="Kraus M.H."/>
            <person name="Ullrich A."/>
            <person name="Schlessinger J."/>
            <person name="Givol D."/>
        </authorList>
    </citation>
    <scope>NUCLEOTIDE SEQUENCE [GENOMIC DNA] OF 1-191 (ISOFORM 1)</scope>
</reference>
<reference key="8">
    <citation type="journal article" date="2014" name="Nat. Commun.">
        <title>Protein interaction network of alternatively spliced isoforms from brain links genetic risk factors for autism.</title>
        <authorList>
            <person name="Corominas R."/>
            <person name="Yang X."/>
            <person name="Lin G.N."/>
            <person name="Kang S."/>
            <person name="Shen Y."/>
            <person name="Ghamsari L."/>
            <person name="Broly M."/>
            <person name="Rodriguez M."/>
            <person name="Tam S."/>
            <person name="Wanamaker S.A."/>
            <person name="Fan C."/>
            <person name="Yi S."/>
            <person name="Tasan M."/>
            <person name="Lemmens I."/>
            <person name="Kuang X."/>
            <person name="Zhao N."/>
            <person name="Malhotra D."/>
            <person name="Michaelson J.J."/>
            <person name="Vacic V."/>
            <person name="Calderwood M.A."/>
            <person name="Roth F.P."/>
            <person name="Tavernier J."/>
            <person name="Horvath S."/>
            <person name="Salehi-Ashtiani K."/>
            <person name="Korkin D."/>
            <person name="Sebat J."/>
            <person name="Hill D.E."/>
            <person name="Hao T."/>
            <person name="Vidal M."/>
            <person name="Iakoucheva L.M."/>
        </authorList>
    </citation>
    <scope>NUCLEOTIDE SEQUENCE [MRNA] OF 1-867 (ISOFORM 6)</scope>
    <source>
        <tissue>Fetal brain</tissue>
    </source>
</reference>
<reference key="9">
    <citation type="journal article" date="1985" name="Proc. Natl. Acad. Sci. U.S.A.">
        <title>A v-erbB-related protooncogene, c-erbB-2, is distinct from the c-erbB-1/epidermal growth factor-receptor gene and is amplified in a human salivary gland adenocarcinoma.</title>
        <authorList>
            <person name="Semba K."/>
            <person name="Kamata N."/>
            <person name="Toyoshima K."/>
            <person name="Yamamoto T."/>
        </authorList>
    </citation>
    <scope>NUCLEOTIDE SEQUENCE [GENOMIC DNA] OF 737-1031</scope>
</reference>
<reference key="10">
    <citation type="journal article" date="1985" name="Science">
        <title>Amplification of a novel v-erbB-related gene in a human mammary carcinoma.</title>
        <authorList>
            <person name="King C.R."/>
            <person name="Kraus M.H."/>
            <person name="Aaronson S.A."/>
        </authorList>
    </citation>
    <scope>NUCLEOTIDE SEQUENCE [GENOMIC DNA] OF 832-909</scope>
    <source>
        <tissue>Mammary carcinoma</tissue>
    </source>
</reference>
<reference key="11">
    <citation type="journal article" date="1993" name="DNA Cell Biol.">
        <title>Molecular cloning and sequencing of an intron of Her-2/neu (ERBB2) gene.</title>
        <authorList>
            <person name="Sarkar F.H."/>
            <person name="Ball D.E."/>
            <person name="Li Y.W."/>
            <person name="Crissman J.D."/>
        </authorList>
    </citation>
    <scope>NUCLEOTIDE SEQUENCE OF 1081-1245</scope>
    <scope>VARIANT ALA-1170</scope>
</reference>
<reference key="12">
    <citation type="journal article" date="1999" name="J. Biol. Chem.">
        <title>ErbB receptor-induced activation of stat transcription factors is mediated by Src tyrosine kinases.</title>
        <authorList>
            <person name="Olayioye M.A."/>
            <person name="Beuvink I."/>
            <person name="Horsch K."/>
            <person name="Daly J.M."/>
            <person name="Hynes N.E."/>
        </authorList>
    </citation>
    <scope>INTERACTION WITH ERBB4</scope>
    <scope>FUNCTION IN ACTIVATION OF STAT5A</scope>
</reference>
<reference key="13">
    <citation type="journal article" date="2000" name="Mol. Cell. Biol.">
        <title>Class II phosphoinositide 3-kinases are downstream targets of activated polypeptide growth factor receptors.</title>
        <authorList>
            <person name="Arcaro A."/>
            <person name="Zvelebil M.J."/>
            <person name="Wallasch C."/>
            <person name="Ullrich A."/>
            <person name="Waterfield M.D."/>
            <person name="Domin J."/>
        </authorList>
    </citation>
    <scope>IDENTIFICATION IN A COMPLEX WITH PIK3C2A AND EGFR</scope>
    <scope>IDENTIFICATION IN A COMPLEX WITH PIK3C2B AND EGFR</scope>
    <scope>INTERACTION WITH PIK3C2B</scope>
</reference>
<reference key="14">
    <citation type="journal article" date="2003" name="Mol. Cancer Res.">
        <title>Heregulin targets gamma-catenin to the nucleolus by a mechanism dependent on the DF3/MUC1 oncoprotein.</title>
        <authorList>
            <person name="Li Y."/>
            <person name="Yu W.-H."/>
            <person name="Ren J."/>
            <person name="Chen W."/>
            <person name="Huang L."/>
            <person name="Kharbanda S."/>
            <person name="Loda M."/>
            <person name="Kufe D."/>
        </authorList>
    </citation>
    <scope>INTERACTION WITH MUC1</scope>
</reference>
<reference key="15">
    <citation type="journal article" date="2004" name="Cancer Cell">
        <title>Binding at and transactivation of the COX-2 promoter by nuclear tyrosine kinase receptor ErbB-2.</title>
        <authorList>
            <person name="Wang S.C."/>
            <person name="Lien H.C."/>
            <person name="Xia W."/>
            <person name="Chen I.F."/>
            <person name="Lo H.W."/>
            <person name="Wang Z."/>
            <person name="Ali-Seyed M."/>
            <person name="Lee D.F."/>
            <person name="Bartholomeusz G."/>
            <person name="Ou-Yang F."/>
            <person name="Giri D.K."/>
            <person name="Hung M.C."/>
        </authorList>
    </citation>
    <scope>FUNCTION</scope>
    <scope>SUBCELLULAR LOCATION</scope>
    <scope>TISSUE SPECIFICITY</scope>
</reference>
<reference key="16">
    <citation type="journal article" date="2004" name="J. Cell Biol.">
        <title>Plexin-B1/RhoGEF-mediated RhoA activation involves the receptor tyrosine kinase ErbB-2.</title>
        <authorList>
            <person name="Swiercz J.M."/>
            <person name="Kuner R."/>
            <person name="Offermanns S."/>
        </authorList>
    </citation>
    <scope>INTERACTION WITH PLXNB1</scope>
</reference>
<reference key="17">
    <citation type="journal article" date="2004" name="Nat. Cell Biol.">
        <title>Memo mediates ErbB2-driven cell motility.</title>
        <authorList>
            <person name="Marone R."/>
            <person name="Hess D."/>
            <person name="Dankort D."/>
            <person name="Muller W.J."/>
            <person name="Hynes N.E."/>
            <person name="Badache A."/>
        </authorList>
    </citation>
    <scope>INTERACTION WITH MEMO1</scope>
</reference>
<reference key="18">
    <citation type="journal article" date="2005" name="Mol. Cell. Biol.">
        <title>Endosomal transport of ErbB-2: mechanism for nuclear entry of the cell surface receptor.</title>
        <authorList>
            <person name="Giri D.K."/>
            <person name="Ali-Seyed M."/>
            <person name="Li L.Y."/>
            <person name="Lee D.F."/>
            <person name="Ling P."/>
            <person name="Bartholomeusz G."/>
            <person name="Wang S.C."/>
            <person name="Hung M.C."/>
        </authorList>
    </citation>
    <scope>SUBCELLULAR LOCATION</scope>
    <scope>NUCLEAR LOCALIZATION SIGNAL</scope>
    <scope>INTERACTION WITH KPNB1; RANBP2; CRM1; EEA1 AND CLTC</scope>
</reference>
<reference key="19">
    <citation type="journal article" date="2006" name="Cell">
        <title>Global, in vivo, and site-specific phosphorylation dynamics in signaling networks.</title>
        <authorList>
            <person name="Olsen J.V."/>
            <person name="Blagoev B."/>
            <person name="Gnad F."/>
            <person name="Macek B."/>
            <person name="Kumar C."/>
            <person name="Mortensen P."/>
            <person name="Mann M."/>
        </authorList>
    </citation>
    <scope>PHOSPHORYLATION [LARGE SCALE ANALYSIS] AT TYR-1248</scope>
    <scope>IDENTIFICATION BY MASS SPECTROMETRY [LARGE SCALE ANALYSIS]</scope>
    <source>
        <tissue>Cervix carcinoma</tissue>
    </source>
</reference>
<reference key="20">
    <citation type="journal article" date="2006" name="EMBO J.">
        <title>Biosynthesis of tumorigenic HER2 C-terminal fragments by alternative initiation of translation.</title>
        <authorList>
            <person name="Anido J."/>
            <person name="Scaltriti M."/>
            <person name="Bech Serra J.J."/>
            <person name="Santiago Josefat B."/>
            <person name="Todo F.R."/>
            <person name="Baselga J."/>
            <person name="Arribas J."/>
        </authorList>
    </citation>
    <scope>FUNCTION</scope>
    <scope>ALTERNATIVE INITIATION (ISOFORMS 2 AND 3)</scope>
    <scope>SUBCELLULAR LOCATION</scope>
    <scope>MUTAGENESIS OF MET-611; MET-687; MET-706 AND MET-712</scope>
</reference>
<reference key="21">
    <citation type="journal article" date="2007" name="Cell. Signal.">
        <title>Neuregulin-1 only induces trans-phosphorylation between ErbB receptor heterodimer partners.</title>
        <authorList>
            <person name="Li Z."/>
            <person name="Mei Y."/>
            <person name="Liu X."/>
            <person name="Zhou M."/>
        </authorList>
    </citation>
    <scope>INTERACTION WITH ERBB4</scope>
    <scope>AUTOPHOSPHORYLATION IN TRANS</scope>
</reference>
<reference key="22">
    <citation type="journal article" date="2007" name="J. Neurosci.">
        <title>Plexin-B2, but not Plexin-B1, critically modulates neuronal migration and patterning of the developing nervous system in vivo.</title>
        <authorList>
            <person name="Deng S."/>
            <person name="Hirschberg A."/>
            <person name="Worzfeld T."/>
            <person name="Penachioni J.Y."/>
            <person name="Korostylev A."/>
            <person name="Swiercz J.M."/>
            <person name="Vodrazka P."/>
            <person name="Mauti O."/>
            <person name="Stoeckli E.T."/>
            <person name="Tamagnone L."/>
            <person name="Offermanns S."/>
            <person name="Kuner R."/>
        </authorList>
    </citation>
    <scope>PHOSPHORYLATION AT TYR-1248</scope>
</reference>
<reference key="23">
    <citation type="journal article" date="2008" name="Mol. Cell">
        <title>Kinase-selective enrichment enables quantitative phosphoproteomics of the kinome across the cell cycle.</title>
        <authorList>
            <person name="Daub H."/>
            <person name="Olsen J.V."/>
            <person name="Bairlein M."/>
            <person name="Gnad F."/>
            <person name="Oppermann F.S."/>
            <person name="Korner R."/>
            <person name="Greff Z."/>
            <person name="Keri G."/>
            <person name="Stemmann O."/>
            <person name="Mann M."/>
        </authorList>
    </citation>
    <scope>PHOSPHORYLATION [LARGE SCALE ANALYSIS] AT SER-1054</scope>
    <scope>IDENTIFICATION BY MASS SPECTROMETRY [LARGE SCALE ANALYSIS]</scope>
    <source>
        <tissue>Cervix carcinoma</tissue>
    </source>
</reference>
<reference key="24">
    <citation type="journal article" date="2008" name="Proc. Natl. Acad. Sci. U.S.A.">
        <title>A quantitative atlas of mitotic phosphorylation.</title>
        <authorList>
            <person name="Dephoure N."/>
            <person name="Zhou C."/>
            <person name="Villen J."/>
            <person name="Beausoleil S.A."/>
            <person name="Bakalarski C.E."/>
            <person name="Elledge S.J."/>
            <person name="Gygi S.P."/>
        </authorList>
    </citation>
    <scope>PHOSPHORYLATION [LARGE SCALE ANALYSIS] AT SER-1054</scope>
    <scope>IDENTIFICATION BY MASS SPECTROMETRY [LARGE SCALE ANALYSIS]</scope>
    <source>
        <tissue>Cervix carcinoma</tissue>
    </source>
</reference>
<reference key="25">
    <citation type="journal article" date="2008" name="Proc. Natl. Acad. Sci. U.S.A.">
        <title>Brk is coamplified with ErbB2 to promote proliferation in breast cancer.</title>
        <authorList>
            <person name="Xiang B."/>
            <person name="Chatti K."/>
            <person name="Qiu H."/>
            <person name="Lakshmi B."/>
            <person name="Krasnitz A."/>
            <person name="Hicks J."/>
            <person name="Yu M."/>
            <person name="Miller W.T."/>
            <person name="Muthuswamy S.K."/>
        </authorList>
    </citation>
    <scope>INTERACTION WITH PTK6</scope>
    <scope>ACTIVITY REGULATION</scope>
</reference>
<reference key="26">
    <citation type="journal article" date="2009" name="Mol. Cancer Res.">
        <title>ErbB2-mediated Src and signal transducer and activator of transcription 3 activation leads to transcriptional up-regulation of p21Cip1 and chemoresistance in breast cancer cells.</title>
        <authorList>
            <person name="Hawthorne V.S."/>
            <person name="Huang W.C."/>
            <person name="Neal C.L."/>
            <person name="Tseng L.M."/>
            <person name="Hung M.C."/>
            <person name="Yu D."/>
        </authorList>
    </citation>
    <scope>FUNCTION IN NUCLEUS</scope>
</reference>
<reference key="27">
    <citation type="journal article" date="2010" name="Oncogene">
        <title>Copine-III interacts with ErbB2 and promotes tumor cell migration.</title>
        <authorList>
            <person name="Heinrich C."/>
            <person name="Keller C."/>
            <person name="Boulay A."/>
            <person name="Vecchi M."/>
            <person name="Bianchi M."/>
            <person name="Sack R."/>
            <person name="Lienhard S."/>
            <person name="Duss S."/>
            <person name="Hofsteenge J."/>
            <person name="Hynes N.E."/>
        </authorList>
    </citation>
    <scope>INTERACTION WITH CPNE3</scope>
</reference>
<reference key="28">
    <citation type="journal article" date="2010" name="Proc. Natl. Acad. Sci. U.S.A.">
        <title>ErbB2 receptor controls microtubule capture by recruiting ACF7 to the plasma membrane of migrating cells.</title>
        <authorList>
            <person name="Zaoui K."/>
            <person name="Benseddik K."/>
            <person name="Daou P."/>
            <person name="Salaun D."/>
            <person name="Badache A."/>
        </authorList>
    </citation>
    <scope>FUNCTION</scope>
</reference>
<reference key="29">
    <citation type="journal article" date="2010" name="Sci. Signal.">
        <title>Quantitative phosphoproteomics reveals widespread full phosphorylation site occupancy during mitosis.</title>
        <authorList>
            <person name="Olsen J.V."/>
            <person name="Vermeulen M."/>
            <person name="Santamaria A."/>
            <person name="Kumar C."/>
            <person name="Miller M.L."/>
            <person name="Jensen L.J."/>
            <person name="Gnad F."/>
            <person name="Cox J."/>
            <person name="Jensen T.S."/>
            <person name="Nigg E.A."/>
            <person name="Brunak S."/>
            <person name="Mann M."/>
        </authorList>
    </citation>
    <scope>PHOSPHORYLATION [LARGE SCALE ANALYSIS] AT SER-1107</scope>
    <scope>IDENTIFICATION BY MASS SPECTROMETRY [LARGE SCALE ANALYSIS]</scope>
    <source>
        <tissue>Cervix carcinoma</tissue>
    </source>
</reference>
<reference key="30">
    <citation type="journal article" date="2011" name="Cancer Res.">
        <title>Genetic and structural variation in the gastric cancer kinome revealed through targeted deep sequencing.</title>
        <authorList>
            <person name="Zang Z.J."/>
            <person name="Ong C.K."/>
            <person name="Cutcutache I."/>
            <person name="Yu W."/>
            <person name="Zhang S.L."/>
            <person name="Huang D."/>
            <person name="Ler L.D."/>
            <person name="Dykema K."/>
            <person name="Gan A."/>
            <person name="Tao J."/>
            <person name="Lim S."/>
            <person name="Liu Y."/>
            <person name="Futreal P.A."/>
            <person name="Grabsch H."/>
            <person name="Furge K.A."/>
            <person name="Goh L.K."/>
            <person name="Rozen S."/>
            <person name="Teh B.T."/>
            <person name="Tan P."/>
        </authorList>
    </citation>
    <scope>CHROMOSOMAL REARRANGEMENT WITH CDK12</scope>
</reference>
<reference key="31">
    <citation type="journal article" date="2011" name="Cancer Res.">
        <title>Nuclear ErbB2 enhances translation and cell growth by activating transcription of ribosomal RNA genes.</title>
        <authorList>
            <person name="Li L.Y."/>
            <person name="Chen H."/>
            <person name="Hsieh Y.H."/>
            <person name="Wang Y.N."/>
            <person name="Chu H.J."/>
            <person name="Chen Y.H."/>
            <person name="Chen H.Y."/>
            <person name="Chien P.J."/>
            <person name="Ma H.T."/>
            <person name="Tsai H.C."/>
            <person name="Lai C.C."/>
            <person name="Sher Y.P."/>
            <person name="Lien H.C."/>
            <person name="Tsai C.H."/>
            <person name="Hung M.C."/>
        </authorList>
    </citation>
    <scope>FUNCTION IN NUCLEUS</scope>
    <scope>INTERACTION WITH ACTB AND RPA194</scope>
    <scope>SUBCELLULAR LOCATION</scope>
</reference>
<reference key="32">
    <citation type="journal article" date="2011" name="Endocrinology">
        <title>Dissociation of epidermal growth factor receptor and ErbB2 heterodimers in the presence of somatostatin receptor 5 modulate signaling pathways.</title>
        <authorList>
            <person name="Kharmate G."/>
            <person name="Rajput P.S."/>
            <person name="Watt H.L."/>
            <person name="Somvanshi R.K."/>
            <person name="Chaudhari N."/>
            <person name="Qiu X."/>
            <person name="Kumar U."/>
        </authorList>
    </citation>
    <scope>INTERACTION WITH EGFR</scope>
</reference>
<reference key="33">
    <citation type="journal article" date="2011" name="Sci. Signal.">
        <title>System-wide temporal characterization of the proteome and phosphoproteome of human embryonic stem cell differentiation.</title>
        <authorList>
            <person name="Rigbolt K.T."/>
            <person name="Prokhorova T.A."/>
            <person name="Akimov V."/>
            <person name="Henningsen J."/>
            <person name="Johansen P.T."/>
            <person name="Kratchmarova I."/>
            <person name="Kassem M."/>
            <person name="Mann M."/>
            <person name="Olsen J.V."/>
            <person name="Blagoev B."/>
        </authorList>
    </citation>
    <scope>PHOSPHORYLATION [LARGE SCALE ANALYSIS] AT SER-1054</scope>
    <scope>IDENTIFICATION BY MASS SPECTROMETRY [LARGE SCALE ANALYSIS]</scope>
</reference>
<reference key="34">
    <citation type="journal article" date="2013" name="J. Proteome Res.">
        <title>Toward a comprehensive characterization of a human cancer cell phosphoproteome.</title>
        <authorList>
            <person name="Zhou H."/>
            <person name="Di Palma S."/>
            <person name="Preisinger C."/>
            <person name="Peng M."/>
            <person name="Polat A.N."/>
            <person name="Heck A.J."/>
            <person name="Mohammed S."/>
        </authorList>
    </citation>
    <scope>PHOSPHORYLATION [LARGE SCALE ANALYSIS] AT THR-182; SER-1054; SER-1083 AND THR-1166</scope>
    <scope>IDENTIFICATION BY MASS SPECTROMETRY [LARGE SCALE ANALYSIS]</scope>
    <source>
        <tissue>Cervix carcinoma</tissue>
        <tissue>Erythroleukemia</tissue>
    </source>
</reference>
<reference key="35">
    <citation type="journal article" date="2014" name="J. Proteomics">
        <title>An enzyme assisted RP-RPLC approach for in-depth analysis of human liver phosphoproteome.</title>
        <authorList>
            <person name="Bian Y."/>
            <person name="Song C."/>
            <person name="Cheng K."/>
            <person name="Dong M."/>
            <person name="Wang F."/>
            <person name="Huang J."/>
            <person name="Sun D."/>
            <person name="Wang L."/>
            <person name="Ye M."/>
            <person name="Zou H."/>
        </authorList>
    </citation>
    <scope>PHOSPHORYLATION [LARGE SCALE ANALYSIS] AT SER-1054 AND SER-1151</scope>
    <scope>IDENTIFICATION BY MASS SPECTROMETRY [LARGE SCALE ANALYSIS]</scope>
    <source>
        <tissue>Liver</tissue>
    </source>
</reference>
<reference key="36">
    <citation type="journal article" date="2015" name="PLoS ONE">
        <title>Client proteins and small molecule inhibitors display distinct binding preferences for constitutive and stress-induced HSP90 isoforms and their conformationally restricted mutants.</title>
        <authorList>
            <person name="Prince T.L."/>
            <person name="Kijima T."/>
            <person name="Tatokoro M."/>
            <person name="Lee S."/>
            <person name="Tsutsumi S."/>
            <person name="Yim K."/>
            <person name="Rivas C."/>
            <person name="Alarcon S."/>
            <person name="Schwartz H."/>
            <person name="Khamit-Kush K."/>
            <person name="Scroggins B.T."/>
            <person name="Beebe K."/>
            <person name="Trepel J.B."/>
            <person name="Neckers L."/>
        </authorList>
    </citation>
    <scope>INTERACTION WITH HSP90AA1 AND HSP90AB1</scope>
</reference>
<reference key="37">
    <citation type="journal article" date="2016" name="Cell Rep.">
        <title>Crystal structure and substrate specificity of PTPN12.</title>
        <authorList>
            <person name="Li H."/>
            <person name="Yang F."/>
            <person name="Liu C."/>
            <person name="Xiao P."/>
            <person name="Xu Y."/>
            <person name="Liang Z."/>
            <person name="Liu C."/>
            <person name="Wang H."/>
            <person name="Wang W."/>
            <person name="Zheng W."/>
            <person name="Zhang W."/>
            <person name="Ma X."/>
            <person name="He D."/>
            <person name="Song X."/>
            <person name="Cui F."/>
            <person name="Xu Z."/>
            <person name="Yi F."/>
            <person name="Sun J.P."/>
            <person name="Yu X."/>
        </authorList>
    </citation>
    <scope>PHOSPHORYLATION AT TYR-1112; TYR-1139; TYR-1196 AND TYR-1248</scope>
    <scope>DEPHOSPHORYLATION BY PTPN12</scope>
</reference>
<reference key="38">
    <citation type="journal article" date="2019" name="Nat. Commun.">
        <title>SORLA regulates endosomal trafficking and oncogenic fitness of HER2.</title>
        <authorList>
            <person name="Pietilae M."/>
            <person name="Sahgal P."/>
            <person name="Peuhu E."/>
            <person name="Jaentti N.Z."/>
            <person name="Paatero I."/>
            <person name="Naervae E."/>
            <person name="Al-Akhrass H."/>
            <person name="Lilja J."/>
            <person name="Georgiadou M."/>
            <person name="Andersen O.M."/>
            <person name="Padzik A."/>
            <person name="Sihto H."/>
            <person name="Joensuu H."/>
            <person name="Blomqvist M."/>
            <person name="Saarinen I."/>
            <person name="Bostroem P.J."/>
            <person name="Taimen P."/>
            <person name="Ivaska J."/>
        </authorList>
    </citation>
    <scope>INTERACTION WITH SORL1</scope>
    <scope>SUBCELLULAR LOCATION</scope>
</reference>
<reference key="39">
    <citation type="journal article" date="2020" name="J. Exp. Clin. Cancer Res.">
        <title>SH3BGRL confers innate drug resistance in breast cancer by stabilizing HER2 activation on cell membrane.</title>
        <authorList>
            <person name="Li H."/>
            <person name="Zhang M."/>
            <person name="Wei Y."/>
            <person name="Haider F."/>
            <person name="Lin Y."/>
            <person name="Guan W."/>
            <person name="Liu Y."/>
            <person name="Zhang S."/>
            <person name="Yuan R."/>
            <person name="Yang X."/>
            <person name="Yang S."/>
            <person name="Wang H."/>
        </authorList>
    </citation>
    <scope>INTERACTION WITH SH3BGRL</scope>
    <scope>SUBCELLULAR LOCATION</scope>
    <scope>PHOSPHORYLATION AT TYR-877 AND TYR-1196</scope>
</reference>
<reference key="40">
    <citation type="journal article" date="2021" name="BMC Mol. Cell Biol.">
        <title>SH3BGRL3 binds to myosin 1c in a calcium dependent manner and modulates migration in the MDA-MB-231 cell line.</title>
        <authorList>
            <person name="Di Pisa F."/>
            <person name="Pesenti E."/>
            <person name="Bono M."/>
            <person name="Mazzarello A.N."/>
            <person name="Bernardi C."/>
            <person name="Lisanti M.P."/>
            <person name="Renzone G."/>
            <person name="Scaloni A."/>
            <person name="Ciccone E."/>
            <person name="Fais F."/>
            <person name="Bruno S."/>
            <person name="Scartezzini P."/>
            <person name="Ghiotto F."/>
        </authorList>
    </citation>
    <scope>SUBCELLULAR LOCATION</scope>
</reference>
<reference key="41">
    <citation type="journal article" date="2023" name="Nat. Commun.">
        <title>IGFBP5 is an ROR1 ligand promoting glioblastoma invasion via ROR1/HER2-CREB signaling axis.</title>
        <authorList>
            <person name="Lin W."/>
            <person name="Niu R."/>
            <person name="Park S.M."/>
            <person name="Zou Y."/>
            <person name="Kim S.S."/>
            <person name="Xia X."/>
            <person name="Xing S."/>
            <person name="Yang Q."/>
            <person name="Sun X."/>
            <person name="Yuan Z."/>
            <person name="Zhou S."/>
            <person name="Zhang D."/>
            <person name="Kwon H.J."/>
            <person name="Park S."/>
            <person name="Il Kim C."/>
            <person name="Koo H."/>
            <person name="Liu Y."/>
            <person name="Wu H."/>
            <person name="Zheng M."/>
            <person name="Yoo H."/>
            <person name="Shi B."/>
            <person name="Park J.B."/>
            <person name="Yin J."/>
        </authorList>
    </citation>
    <scope>INTERACTION WITH ROR1</scope>
</reference>
<reference key="42">
    <citation type="journal article" date="1999" name="J. Biol. Chem.">
        <title>Poor binding of a HER-2/neu epitope (GP2) to HLA-A2.1 is due to a lack of interactions with the center of the peptide.</title>
        <authorList>
            <person name="Kuhns J.J."/>
            <person name="Batalia M.A."/>
            <person name="Yan S."/>
            <person name="Collins E.J."/>
        </authorList>
    </citation>
    <scope>X-RAY CRYSTALLOGRAPHY (2.4 ANGSTROMS) OF 654-662 IN COMPLEX WITH HLA AND BETA-2 MICROGLOBULIN</scope>
</reference>
<reference key="43">
    <citation type="journal article" date="2003" name="J. Biol. Chem.">
        <title>Novel mode of ligand recognition by the Erbin PDZ domain.</title>
        <authorList>
            <person name="Birrane G."/>
            <person name="Chung J."/>
            <person name="Ladias J.A."/>
        </authorList>
    </citation>
    <scope>X-RAY CRYSTALLOGRAPHY (1.25 ANGSTROMS) OF 1247-1255 IN COMPLEX WITH ERBIN</scope>
    <scope>INTERACTION WITH ERBIN</scope>
</reference>
<reference key="44">
    <citation type="journal article" date="2003" name="J. Biomol. NMR">
        <title>Solution structure of the human Grb7-SH2 domain/erbB2 peptide complex and structural basis for Grb7 binding to ErbB2.</title>
        <authorList>
            <person name="Ivancic M."/>
            <person name="Daly R.J."/>
            <person name="Lyons B.A."/>
        </authorList>
    </citation>
    <scope>STRUCTURE BY NMR OF 1135-1144 IN COMPLEX WITH GRB7</scope>
    <scope>INTERACTION WITH GRB7</scope>
</reference>
<reference key="45">
    <citation type="journal article" date="2003" name="Nature">
        <title>Structure of the extracellular region of HER2 alone and in complex with the Herceptin Fab.</title>
        <authorList>
            <person name="Cho H.-S."/>
            <person name="Mason K."/>
            <person name="Ramyar K.X."/>
            <person name="Stanley A.M."/>
            <person name="Gabelli S.B."/>
            <person name="Denney D.W. Jr."/>
            <person name="Leahy D.J."/>
        </authorList>
    </citation>
    <scope>X-RAY CRYSTALLOGRAPHY (2.52 ANGSTROMS) OF 23-629 IN COMPLEX WITH THE ANTIBODY HERCEPTIN</scope>
</reference>
<reference key="46">
    <citation type="journal article" date="2004" name="Cancer Cell">
        <title>Insights into ErbB signaling from the structure of the ErbB2-pertuzumab complex.</title>
        <authorList>
            <person name="Franklin M.C."/>
            <person name="Carey K.D."/>
            <person name="Vajdos F.F."/>
            <person name="Leahy D.J."/>
            <person name="de Vos A.M."/>
            <person name="Sliwkowski M.X."/>
        </authorList>
    </citation>
    <scope>X-RAY CRYSTALLOGRAPHY (3.25 ANGSTROMS) OF 23-646 IN COMPLEX WITH THE ANTIBODY PERTUZUMAB</scope>
    <scope>INTERACTION WITH ERBB3</scope>
    <scope>MUTAGENESIS OF 317-LEU-HIS-318</scope>
    <scope>DISULFIDE BONDS</scope>
    <scope>GLYCOSYLATION AT ASN-187; ASN-259 AND ASN-530</scope>
</reference>
<reference key="47">
    <citation type="journal article" date="2009" name="Science">
        <title>Variants of the antibody herceptin that interact with HER2 and VEGF at the antigen binding site.</title>
        <authorList>
            <person name="Bostrom J."/>
            <person name="Yu S.F."/>
            <person name="Kan D."/>
            <person name="Appleton B.A."/>
            <person name="Lee C.V."/>
            <person name="Billeci K."/>
            <person name="Man W."/>
            <person name="Peale F."/>
            <person name="Ross S."/>
            <person name="Wiesmann C."/>
            <person name="Fuh G."/>
        </authorList>
    </citation>
    <scope>X-RAY CRYSTALLOGRAPHY (2.9 ANGSTROMS) OF 23-646 IN COMPLEX WITH THE ANTIBODY HERCEPTIN</scope>
    <scope>DISULFIDE BONDS</scope>
    <scope>GLYCOSYLATION AT ASN-259 AND ASN-530</scope>
</reference>
<reference key="48">
    <citation type="journal article" date="2010" name="Proc. Natl. Acad. Sci. U.S.A.">
        <title>Structural basis for high-affinity HER2 receptor binding by an engineered protein.</title>
        <authorList>
            <person name="Eigenbrot C."/>
            <person name="Ultsch M."/>
            <person name="Dubnovitsky A."/>
            <person name="Abrahmsen L."/>
            <person name="Hard T."/>
        </authorList>
    </citation>
    <scope>X-RAY CRYSTALLOGRAPHY (2.9 ANGSTROMS) OF 23-646 IN COMPLEX WITH ENGINEERED ANTIBODY ZHER2</scope>
    <scope>DISULFIDE BONDS</scope>
    <scope>GLYCOSYLATION AT ASN-68; ASN-259 AND ASN-571</scope>
</reference>
<reference key="49">
    <citation type="journal article" date="2011" name="J. Biol. Chem.">
        <title>Structural analysis of the mechanism of inhibition and allosteric activation of the kinase domain of HER2 protein.</title>
        <authorList>
            <person name="Aertgeerts K."/>
            <person name="Skene R."/>
            <person name="Yano J."/>
            <person name="Sang B.C."/>
            <person name="Zou H."/>
            <person name="Snell G."/>
            <person name="Jennings A."/>
            <person name="Iwamoto K."/>
            <person name="Habuka N."/>
            <person name="Hirokawa A."/>
            <person name="Ishikawa T."/>
            <person name="Tanaka T."/>
            <person name="Miki H."/>
            <person name="Ohta Y."/>
            <person name="Sogabe S."/>
        </authorList>
    </citation>
    <scope>X-RAY CRYSTALLOGRAPHY (2.25 ANGSTROMS) OF 703-1029 IN COMPLEX WITH INHIBITOR SYR127063</scope>
    <scope>CATALYTIC ACTIVITY</scope>
    <scope>SUBUNIT</scope>
    <scope>ACTIVITY REGULATION</scope>
</reference>
<reference key="50">
    <citation type="journal article" date="1993" name="Genomics">
        <title>Characterization of a new allele of the human ERBB2 gene by allele-specific competition hybridization.</title>
        <authorList>
            <person name="Ehsani A."/>
            <person name="Low J."/>
            <person name="Wallace R.B."/>
            <person name="Wu A.M."/>
        </authorList>
    </citation>
    <scope>VARIANTS VAL-654 AND VAL-655</scope>
</reference>
<reference key="51">
    <citation type="journal article" date="2004" name="Nature">
        <title>Lung cancer: intragenic ERBB2 kinase mutations in tumours.</title>
        <authorList>
            <consortium name="Cancer genome project and collaborative group"/>
            <person name="Stephens P."/>
            <person name="Hunter C."/>
            <person name="Bignell G."/>
            <person name="Edkins S."/>
            <person name="Davies H."/>
            <person name="Teague J."/>
            <person name="Stevens C."/>
            <person name="O'Meara S."/>
            <person name="Smith R."/>
            <person name="Parker A."/>
            <person name="Barthorpe A."/>
            <person name="Blow M."/>
            <person name="Brackenbury L."/>
            <person name="Butler A."/>
            <person name="Clarke O."/>
            <person name="Cole J."/>
            <person name="Dicks E."/>
            <person name="Dike A."/>
            <person name="Drozd A."/>
            <person name="Edwards K."/>
            <person name="Forbes S."/>
            <person name="Foster R."/>
            <person name="Gray K."/>
            <person name="Greenman C."/>
            <person name="Halliday K."/>
            <person name="Hills K."/>
            <person name="Kosmidou V."/>
            <person name="Lugg R."/>
            <person name="Menzies A."/>
            <person name="Perry J."/>
            <person name="Petty R."/>
            <person name="Raine K."/>
            <person name="Ratford L."/>
            <person name="Shepherd R."/>
            <person name="Small A."/>
            <person name="Stephens Y."/>
            <person name="Tofts C."/>
            <person name="Varian J."/>
            <person name="West S."/>
            <person name="Widaa S."/>
            <person name="Yates A."/>
            <person name="Brasseur F."/>
            <person name="Cooper C.S."/>
            <person name="Flanagan A.M."/>
            <person name="Knowles M."/>
            <person name="Leung S.Y."/>
            <person name="Louis D.N."/>
            <person name="Looijenga L.H."/>
            <person name="Malkowicz B."/>
            <person name="Pierotti M.A."/>
            <person name="Teh B."/>
            <person name="Chenevix-Trench G."/>
            <person name="Weber B.L."/>
            <person name="Yuen S.T."/>
            <person name="Harris G."/>
            <person name="Goldstraw P."/>
            <person name="Nicholson A.G."/>
            <person name="Futreal P.A."/>
            <person name="Wooster R."/>
            <person name="Stratton M.R."/>
        </authorList>
    </citation>
    <scope>INVOLVEMENT IN CANCER</scope>
    <scope>VARIANT GASC SER-776</scope>
    <scope>VARIANT OC SER-857</scope>
    <scope>VARIANT GLM LYS-914</scope>
    <scope>VARIANTS LNCR PRO-755; ALA-TYR-VAL-MET-774 INS AND VAL-GLY-SER-779 INS</scope>
</reference>
<reference key="52">
    <citation type="journal article" date="2007" name="Nature">
        <title>Patterns of somatic mutation in human cancer genomes.</title>
        <authorList>
            <person name="Greenman C."/>
            <person name="Stephens P."/>
            <person name="Smith R."/>
            <person name="Dalgliesh G.L."/>
            <person name="Hunter C."/>
            <person name="Bignell G."/>
            <person name="Davies H."/>
            <person name="Teague J."/>
            <person name="Butler A."/>
            <person name="Stevens C."/>
            <person name="Edkins S."/>
            <person name="O'Meara S."/>
            <person name="Vastrik I."/>
            <person name="Schmidt E.E."/>
            <person name="Avis T."/>
            <person name="Barthorpe S."/>
            <person name="Bhamra G."/>
            <person name="Buck G."/>
            <person name="Choudhury B."/>
            <person name="Clements J."/>
            <person name="Cole J."/>
            <person name="Dicks E."/>
            <person name="Forbes S."/>
            <person name="Gray K."/>
            <person name="Halliday K."/>
            <person name="Harrison R."/>
            <person name="Hills K."/>
            <person name="Hinton J."/>
            <person name="Jenkinson A."/>
            <person name="Jones D."/>
            <person name="Menzies A."/>
            <person name="Mironenko T."/>
            <person name="Perry J."/>
            <person name="Raine K."/>
            <person name="Richardson D."/>
            <person name="Shepherd R."/>
            <person name="Small A."/>
            <person name="Tofts C."/>
            <person name="Varian J."/>
            <person name="Webb T."/>
            <person name="West S."/>
            <person name="Widaa S."/>
            <person name="Yates A."/>
            <person name="Cahill D.P."/>
            <person name="Louis D.N."/>
            <person name="Goldstraw P."/>
            <person name="Nicholson A.G."/>
            <person name="Brasseur F."/>
            <person name="Looijenga L."/>
            <person name="Weber B.L."/>
            <person name="Chiew Y.-E."/>
            <person name="DeFazio A."/>
            <person name="Greaves M.F."/>
            <person name="Green A.R."/>
            <person name="Campbell P."/>
            <person name="Birney E."/>
            <person name="Easton D.F."/>
            <person name="Chenevix-Trench G."/>
            <person name="Tan M.-H."/>
            <person name="Khoo S.K."/>
            <person name="Teh B.T."/>
            <person name="Yuen S.T."/>
            <person name="Leung S.Y."/>
            <person name="Wooster R."/>
            <person name="Futreal P.A."/>
            <person name="Stratton M.R."/>
        </authorList>
    </citation>
    <scope>VARIANTS [LARGE SCALE ANALYSIS] VAL-654; VAL-655; SER-768; ALA-1170 AND ASP-1216</scope>
    <scope>VARIANT GASC SER-776</scope>
    <scope>VARIANT OC SER-857</scope>
</reference>
<reference key="53">
    <citation type="journal article" date="2021" name="J. Clin. Invest.">
        <title>Dysregulation of the NRG1/ERBB pathway causes a developmental disorder with gastrointestinal dysmotility in humans.</title>
        <authorList>
            <person name="Le T.L."/>
            <person name="Galmiche L."/>
            <person name="Levy J."/>
            <person name="Suwannarat P."/>
            <person name="Hellebrekers D.M."/>
            <person name="Morarach K."/>
            <person name="Boismoreau F."/>
            <person name="Theunissen T.E."/>
            <person name="Lefebvre M."/>
            <person name="Pelet A."/>
            <person name="Martinovic J."/>
            <person name="Gelot A."/>
            <person name="Guimiot F."/>
            <person name="Calleroz A."/>
            <person name="Gitiaux C."/>
            <person name="Hully M."/>
            <person name="Goulet O."/>
            <person name="Chardot C."/>
            <person name="Drunat S."/>
            <person name="Capri Y."/>
            <person name="Bole-Feysot C."/>
            <person name="Nitschke P."/>
            <person name="Whalen S."/>
            <person name="Mouthon L."/>
            <person name="Babcock H.E."/>
            <person name="Hofstra R."/>
            <person name="de Coo I.F."/>
            <person name="Tabet A.C."/>
            <person name="Molina T.J."/>
            <person name="Keren B."/>
            <person name="Brooks A."/>
            <person name="Smeets H.J."/>
            <person name="Marklund U."/>
            <person name="Gordon C.T."/>
            <person name="Lyonnet S."/>
            <person name="Amiel J."/>
            <person name="Bondurand N."/>
        </authorList>
    </citation>
    <scope>INVOLVEMENT IN VSCN2</scope>
    <scope>VARIANT VSCN2 VAL-710</scope>
    <scope>CHARACTERIZATION OF VARIANT VSCN2 VAL-710</scope>
    <scope>SUBCELLULAR LOCATION</scope>
    <scope>PHOSPHORYLATION</scope>
</reference>
<name>ERBB2_HUMAN</name>
<dbReference type="EC" id="2.7.10.1"/>
<dbReference type="EMBL" id="AH001455">
    <property type="protein sequence ID" value="AAA35808.1"/>
    <property type="molecule type" value="Genomic_DNA"/>
</dbReference>
<dbReference type="EMBL" id="X03363">
    <property type="protein sequence ID" value="CAA27060.1"/>
    <property type="molecule type" value="mRNA"/>
</dbReference>
<dbReference type="EMBL" id="M11730">
    <property type="protein sequence ID" value="AAA75493.1"/>
    <property type="molecule type" value="mRNA"/>
</dbReference>
<dbReference type="EMBL" id="M12036">
    <property type="protein sequence ID" value="AAA35978.1"/>
    <property type="molecule type" value="Genomic_DNA"/>
</dbReference>
<dbReference type="EMBL" id="AY208911">
    <property type="protein sequence ID" value="AAO18082.1"/>
    <property type="molecule type" value="Genomic_DNA"/>
</dbReference>
<dbReference type="EMBL" id="AK295195">
    <property type="protein sequence ID" value="BAG58195.1"/>
    <property type="molecule type" value="mRNA"/>
</dbReference>
<dbReference type="EMBL" id="CH471152">
    <property type="protein sequence ID" value="EAW60597.1"/>
    <property type="molecule type" value="Genomic_DNA"/>
</dbReference>
<dbReference type="EMBL" id="BC167147">
    <property type="protein sequence ID" value="AAI67147.1"/>
    <property type="molecule type" value="mRNA"/>
</dbReference>
<dbReference type="EMBL" id="M16792">
    <property type="protein sequence ID" value="AAA58637.1"/>
    <property type="molecule type" value="Genomic_DNA"/>
</dbReference>
<dbReference type="EMBL" id="M16789">
    <property type="protein sequence ID" value="AAA58637.1"/>
    <property type="status" value="JOINED"/>
    <property type="molecule type" value="Genomic_DNA"/>
</dbReference>
<dbReference type="EMBL" id="M16790">
    <property type="protein sequence ID" value="AAA58637.1"/>
    <property type="status" value="JOINED"/>
    <property type="molecule type" value="Genomic_DNA"/>
</dbReference>
<dbReference type="EMBL" id="M16791">
    <property type="protein sequence ID" value="AAA58637.1"/>
    <property type="status" value="JOINED"/>
    <property type="molecule type" value="Genomic_DNA"/>
</dbReference>
<dbReference type="EMBL" id="KJ534964">
    <property type="protein sequence ID" value="AHW56604.1"/>
    <property type="molecule type" value="mRNA"/>
</dbReference>
<dbReference type="EMBL" id="L29395">
    <property type="protein sequence ID" value="AAA35809.1"/>
    <property type="molecule type" value="Genomic_DNA"/>
</dbReference>
<dbReference type="EMBL" id="M95667">
    <property type="protein sequence ID" value="AAC37531.1"/>
    <property type="molecule type" value="Genomic_DNA"/>
</dbReference>
<dbReference type="CCDS" id="CCDS32642.1">
    <molecule id="P04626-1"/>
</dbReference>
<dbReference type="CCDS" id="CCDS45667.1">
    <molecule id="P04626-5"/>
</dbReference>
<dbReference type="CCDS" id="CCDS74052.1">
    <molecule id="P04626-4"/>
</dbReference>
<dbReference type="PIR" id="A24571">
    <property type="entry name" value="A24571"/>
</dbReference>
<dbReference type="RefSeq" id="NP_001005862.1">
    <molecule id="P04626-5"/>
    <property type="nucleotide sequence ID" value="NM_001005862.3"/>
</dbReference>
<dbReference type="RefSeq" id="NP_001276865.1">
    <molecule id="P04626-4"/>
    <property type="nucleotide sequence ID" value="NM_001289936.2"/>
</dbReference>
<dbReference type="RefSeq" id="NP_001276867.1">
    <property type="nucleotide sequence ID" value="NM_001289938.1"/>
</dbReference>
<dbReference type="RefSeq" id="NP_001369711.1">
    <molecule id="P04626-5"/>
    <property type="nucleotide sequence ID" value="NM_001382782.1"/>
</dbReference>
<dbReference type="RefSeq" id="NP_001369712.1">
    <molecule id="P04626-5"/>
    <property type="nucleotide sequence ID" value="NM_001382783.1"/>
</dbReference>
<dbReference type="RefSeq" id="NP_004439.2">
    <molecule id="P04626-1"/>
    <property type="nucleotide sequence ID" value="NM_004448.4"/>
</dbReference>
<dbReference type="RefSeq" id="XP_047291546.1">
    <molecule id="P04626-4"/>
    <property type="nucleotide sequence ID" value="XM_047435590.1"/>
</dbReference>
<dbReference type="PDB" id="1MFG">
    <property type="method" value="X-ray"/>
    <property type="resolution" value="1.25 A"/>
    <property type="chains" value="B=1247-1255"/>
</dbReference>
<dbReference type="PDB" id="1MFL">
    <property type="method" value="X-ray"/>
    <property type="resolution" value="1.88 A"/>
    <property type="chains" value="B=1247-1255"/>
</dbReference>
<dbReference type="PDB" id="1MW4">
    <property type="method" value="NMR"/>
    <property type="chains" value="B=1135-1144"/>
</dbReference>
<dbReference type="PDB" id="1N8Z">
    <property type="method" value="X-ray"/>
    <property type="resolution" value="2.52 A"/>
    <property type="chains" value="C=23-629"/>
</dbReference>
<dbReference type="PDB" id="1QR1">
    <property type="method" value="X-ray"/>
    <property type="resolution" value="2.40 A"/>
    <property type="chains" value="C/F=654-662"/>
</dbReference>
<dbReference type="PDB" id="1S78">
    <property type="method" value="X-ray"/>
    <property type="resolution" value="3.25 A"/>
    <property type="chains" value="A/B=23-646"/>
</dbReference>
<dbReference type="PDB" id="2A91">
    <property type="method" value="X-ray"/>
    <property type="resolution" value="2.50 A"/>
    <property type="chains" value="A=22-530"/>
</dbReference>
<dbReference type="PDB" id="2JWA">
    <property type="method" value="NMR"/>
    <property type="chains" value="A/B=641-684"/>
</dbReference>
<dbReference type="PDB" id="2KS1">
    <property type="method" value="NMR"/>
    <property type="chains" value="A=641-684"/>
</dbReference>
<dbReference type="PDB" id="2L4K">
    <property type="method" value="NMR"/>
    <property type="chains" value="B=1135-1144"/>
</dbReference>
<dbReference type="PDB" id="2N2A">
    <property type="method" value="NMR"/>
    <property type="chains" value="A/B=644-700"/>
</dbReference>
<dbReference type="PDB" id="3BE1">
    <property type="method" value="X-ray"/>
    <property type="resolution" value="2.90 A"/>
    <property type="chains" value="A=23-646"/>
</dbReference>
<dbReference type="PDB" id="3H3B">
    <property type="method" value="X-ray"/>
    <property type="resolution" value="2.45 A"/>
    <property type="chains" value="A/B=23-214"/>
</dbReference>
<dbReference type="PDB" id="3MZW">
    <property type="method" value="X-ray"/>
    <property type="resolution" value="2.90 A"/>
    <property type="chains" value="A=23-646"/>
</dbReference>
<dbReference type="PDB" id="3N85">
    <property type="method" value="X-ray"/>
    <property type="resolution" value="3.20 A"/>
    <property type="chains" value="A=23-646"/>
</dbReference>
<dbReference type="PDB" id="3PP0">
    <property type="method" value="X-ray"/>
    <property type="resolution" value="2.25 A"/>
    <property type="chains" value="A/B=703-1029"/>
</dbReference>
<dbReference type="PDB" id="3RCD">
    <property type="method" value="X-ray"/>
    <property type="resolution" value="3.21 A"/>
    <property type="chains" value="A/B/C/D=713-1028"/>
</dbReference>
<dbReference type="PDB" id="3WLW">
    <property type="method" value="X-ray"/>
    <property type="resolution" value="3.09 A"/>
    <property type="chains" value="A/B=23-586"/>
</dbReference>
<dbReference type="PDB" id="3WSQ">
    <property type="method" value="X-ray"/>
    <property type="resolution" value="3.50 A"/>
    <property type="chains" value="A=23-586"/>
</dbReference>
<dbReference type="PDB" id="4GFU">
    <property type="method" value="X-ray"/>
    <property type="resolution" value="2.00 A"/>
    <property type="chains" value="F=1246-1252"/>
</dbReference>
<dbReference type="PDB" id="4HRL">
    <property type="method" value="X-ray"/>
    <property type="resolution" value="2.55 A"/>
    <property type="chains" value="C=24-219"/>
</dbReference>
<dbReference type="PDB" id="4HRM">
    <property type="method" value="X-ray"/>
    <property type="resolution" value="3.20 A"/>
    <property type="chains" value="A/C=24-219"/>
</dbReference>
<dbReference type="PDB" id="4HRN">
    <property type="method" value="X-ray"/>
    <property type="resolution" value="2.65 A"/>
    <property type="chains" value="C/D=529-625"/>
</dbReference>
<dbReference type="PDB" id="4NND">
    <property type="method" value="X-ray"/>
    <property type="resolution" value="2.50 A"/>
    <property type="chains" value="C/E/F/H=1109-1114"/>
</dbReference>
<dbReference type="PDB" id="5K33">
    <property type="method" value="X-ray"/>
    <property type="resolution" value="3.30 A"/>
    <property type="chains" value="C=23-629"/>
</dbReference>
<dbReference type="PDB" id="5KWG">
    <property type="method" value="X-ray"/>
    <property type="resolution" value="4.30 A"/>
    <property type="chains" value="C=23-653"/>
</dbReference>
<dbReference type="PDB" id="5MY6">
    <property type="method" value="X-ray"/>
    <property type="resolution" value="2.25 A"/>
    <property type="chains" value="A=24-645"/>
</dbReference>
<dbReference type="PDB" id="5O4G">
    <property type="method" value="X-ray"/>
    <property type="resolution" value="3.00 A"/>
    <property type="chains" value="C=23-628"/>
</dbReference>
<dbReference type="PDB" id="5OB4">
    <property type="method" value="NMR"/>
    <property type="chains" value="A/B=641-684"/>
</dbReference>
<dbReference type="PDB" id="5TQS">
    <property type="method" value="X-ray"/>
    <property type="resolution" value="1.88 A"/>
    <property type="chains" value="E/F/G/H=1218-1228"/>
</dbReference>
<dbReference type="PDB" id="6ATT">
    <property type="method" value="X-ray"/>
    <property type="resolution" value="3.77 A"/>
    <property type="chains" value="A=23-652"/>
</dbReference>
<dbReference type="PDB" id="6BGT">
    <property type="method" value="X-ray"/>
    <property type="resolution" value="2.70 A"/>
    <property type="chains" value="C=1-652"/>
</dbReference>
<dbReference type="PDB" id="6J71">
    <property type="method" value="X-ray"/>
    <property type="resolution" value="2.92 A"/>
    <property type="chains" value="A=22-639"/>
</dbReference>
<dbReference type="PDB" id="6LBX">
    <property type="method" value="X-ray"/>
    <property type="resolution" value="2.03 A"/>
    <property type="chains" value="B=531-626"/>
</dbReference>
<dbReference type="PDB" id="6OGE">
    <property type="method" value="EM"/>
    <property type="resolution" value="4.36 A"/>
    <property type="chains" value="A=23-644"/>
</dbReference>
<dbReference type="PDB" id="7JXH">
    <property type="method" value="X-ray"/>
    <property type="resolution" value="3.27 A"/>
    <property type="chains" value="A/B/C/D/E/F/G/H=703-1024"/>
</dbReference>
<dbReference type="PDB" id="7MN5">
    <property type="method" value="EM"/>
    <property type="resolution" value="2.93 A"/>
    <property type="chains" value="B=1-1029"/>
</dbReference>
<dbReference type="PDB" id="7MN6">
    <property type="method" value="EM"/>
    <property type="resolution" value="3.09 A"/>
    <property type="chains" value="B=1-1029"/>
</dbReference>
<dbReference type="PDB" id="7MN8">
    <property type="method" value="EM"/>
    <property type="resolution" value="3.45 A"/>
    <property type="chains" value="B=1-1029"/>
</dbReference>
<dbReference type="PDB" id="7PCD">
    <property type="method" value="X-ray"/>
    <property type="resolution" value="1.77 A"/>
    <property type="chains" value="A=703-1029"/>
</dbReference>
<dbReference type="PDB" id="7QVK">
    <property type="method" value="X-ray"/>
    <property type="resolution" value="3.10 A"/>
    <property type="chains" value="AAA=23-646"/>
</dbReference>
<dbReference type="PDB" id="8FFJ">
    <property type="method" value="EM"/>
    <property type="resolution" value="7.50 A"/>
    <property type="chains" value="X=23-644"/>
</dbReference>
<dbReference type="PDB" id="8HGO">
    <property type="method" value="EM"/>
    <property type="resolution" value="3.31 A"/>
    <property type="chains" value="B=1-693"/>
</dbReference>
<dbReference type="PDB" id="8HGP">
    <property type="method" value="EM"/>
    <property type="resolution" value="4.53 A"/>
    <property type="chains" value="B=1-693"/>
</dbReference>
<dbReference type="PDB" id="8JYQ">
    <property type="method" value="X-ray"/>
    <property type="resolution" value="1.75 A"/>
    <property type="chains" value="C/F=611-618"/>
</dbReference>
<dbReference type="PDB" id="8JYR">
    <property type="method" value="X-ray"/>
    <property type="resolution" value="1.69 A"/>
    <property type="chains" value="A=23-216"/>
</dbReference>
<dbReference type="PDB" id="8PWH">
    <property type="method" value="EM"/>
    <property type="resolution" value="3.17 A"/>
    <property type="chains" value="E=23-646"/>
</dbReference>
<dbReference type="PDB" id="8Q6J">
    <property type="method" value="EM"/>
    <property type="resolution" value="3.30 A"/>
    <property type="chains" value="E=23-646"/>
</dbReference>
<dbReference type="PDB" id="8U4K">
    <property type="method" value="EM"/>
    <property type="resolution" value="4.27 A"/>
    <property type="chains" value="B=24-629"/>
</dbReference>
<dbReference type="PDB" id="8U4L">
    <property type="method" value="EM"/>
    <property type="resolution" value="3.31 A"/>
    <property type="chains" value="B=24-629"/>
</dbReference>
<dbReference type="PDB" id="8U8X">
    <property type="method" value="X-ray"/>
    <property type="resolution" value="1.69 A"/>
    <property type="chains" value="A=694-1029"/>
</dbReference>
<dbReference type="PDB" id="8VB5">
    <property type="method" value="X-ray"/>
    <property type="resolution" value="1.48 A"/>
    <property type="chains" value="A=703-1029"/>
</dbReference>
<dbReference type="PDB" id="8VQD">
    <property type="method" value="EM"/>
    <property type="resolution" value="2.61 A"/>
    <property type="chains" value="A=23-652"/>
</dbReference>
<dbReference type="PDB" id="8VQE">
    <property type="method" value="EM"/>
    <property type="resolution" value="2.67 A"/>
    <property type="chains" value="A/B=23-652"/>
</dbReference>
<dbReference type="PDB" id="9L1S">
    <property type="method" value="EM"/>
    <property type="resolution" value="3.00 A"/>
    <property type="chains" value="A=23-652"/>
</dbReference>
<dbReference type="PDBsum" id="1MFG"/>
<dbReference type="PDBsum" id="1MFL"/>
<dbReference type="PDBsum" id="1MW4"/>
<dbReference type="PDBsum" id="1N8Z"/>
<dbReference type="PDBsum" id="1QR1"/>
<dbReference type="PDBsum" id="1S78"/>
<dbReference type="PDBsum" id="2A91"/>
<dbReference type="PDBsum" id="2JWA"/>
<dbReference type="PDBsum" id="2KS1"/>
<dbReference type="PDBsum" id="2L4K"/>
<dbReference type="PDBsum" id="2N2A"/>
<dbReference type="PDBsum" id="3BE1"/>
<dbReference type="PDBsum" id="3H3B"/>
<dbReference type="PDBsum" id="3MZW"/>
<dbReference type="PDBsum" id="3N85"/>
<dbReference type="PDBsum" id="3PP0"/>
<dbReference type="PDBsum" id="3RCD"/>
<dbReference type="PDBsum" id="3WLW"/>
<dbReference type="PDBsum" id="3WSQ"/>
<dbReference type="PDBsum" id="4GFU"/>
<dbReference type="PDBsum" id="4HRL"/>
<dbReference type="PDBsum" id="4HRM"/>
<dbReference type="PDBsum" id="4HRN"/>
<dbReference type="PDBsum" id="4NND"/>
<dbReference type="PDBsum" id="5K33"/>
<dbReference type="PDBsum" id="5KWG"/>
<dbReference type="PDBsum" id="5MY6"/>
<dbReference type="PDBsum" id="5O4G"/>
<dbReference type="PDBsum" id="5OB4"/>
<dbReference type="PDBsum" id="5TQS"/>
<dbReference type="PDBsum" id="6ATT"/>
<dbReference type="PDBsum" id="6BGT"/>
<dbReference type="PDBsum" id="6J71"/>
<dbReference type="PDBsum" id="6LBX"/>
<dbReference type="PDBsum" id="6OGE"/>
<dbReference type="PDBsum" id="7JXH"/>
<dbReference type="PDBsum" id="7MN5"/>
<dbReference type="PDBsum" id="7MN6"/>
<dbReference type="PDBsum" id="7MN8"/>
<dbReference type="PDBsum" id="7PCD"/>
<dbReference type="PDBsum" id="7QVK"/>
<dbReference type="PDBsum" id="8FFJ"/>
<dbReference type="PDBsum" id="8HGO"/>
<dbReference type="PDBsum" id="8HGP"/>
<dbReference type="PDBsum" id="8JYQ"/>
<dbReference type="PDBsum" id="8JYR"/>
<dbReference type="PDBsum" id="8PWH"/>
<dbReference type="PDBsum" id="8Q6J"/>
<dbReference type="PDBsum" id="8U4K"/>
<dbReference type="PDBsum" id="8U4L"/>
<dbReference type="PDBsum" id="8U8X"/>
<dbReference type="PDBsum" id="8VB5"/>
<dbReference type="PDBsum" id="8VQD"/>
<dbReference type="PDBsum" id="8VQE"/>
<dbReference type="PDBsum" id="9L1S"/>
<dbReference type="BMRB" id="P04626"/>
<dbReference type="EMDB" id="EMD-17993"/>
<dbReference type="EMDB" id="EMD-18188"/>
<dbReference type="EMDB" id="EMD-18189"/>
<dbReference type="EMDB" id="EMD-18190"/>
<dbReference type="EMDB" id="EMD-20055"/>
<dbReference type="EMDB" id="EMD-29044"/>
<dbReference type="EMDB" id="EMD-34744"/>
<dbReference type="EMDB" id="EMD-34745"/>
<dbReference type="EMDB" id="EMD-41885"/>
<dbReference type="EMDB" id="EMD-41886"/>
<dbReference type="EMDB" id="EMD-43439"/>
<dbReference type="EMDB" id="EMD-43440"/>
<dbReference type="EMDB" id="EMD-62753"/>
<dbReference type="SMR" id="P04626"/>
<dbReference type="BioGRID" id="108376">
    <property type="interactions" value="720"/>
</dbReference>
<dbReference type="CORUM" id="P04626"/>
<dbReference type="DIP" id="DIP-8N"/>
<dbReference type="ELM" id="P04626"/>
<dbReference type="FunCoup" id="P04626">
    <property type="interactions" value="2287"/>
</dbReference>
<dbReference type="IntAct" id="P04626">
    <property type="interactions" value="525"/>
</dbReference>
<dbReference type="MINT" id="P04626"/>
<dbReference type="STRING" id="9606.ENSP00000269571"/>
<dbReference type="BindingDB" id="P04626"/>
<dbReference type="ChEMBL" id="CHEMBL1824"/>
<dbReference type="DrugBank" id="DB08916">
    <property type="generic name" value="Afatinib"/>
</dbReference>
<dbReference type="DrugBank" id="DB06021">
    <property type="generic name" value="AV-412"/>
</dbReference>
<dbReference type="DrugBank" id="DB12318">
    <property type="generic name" value="BMS-599626"/>
</dbReference>
<dbReference type="DrugBank" id="DB11665">
    <property type="generic name" value="BMS-690514"/>
</dbReference>
<dbReference type="DrugBank" id="DB12267">
    <property type="generic name" value="Brigatinib"/>
</dbReference>
<dbReference type="DrugBank" id="DB05424">
    <property type="generic name" value="Canertinib"/>
</dbReference>
<dbReference type="DrugBank" id="DB12302">
    <property type="generic name" value="CP-724714"/>
</dbReference>
<dbReference type="DrugBank" id="DB12174">
    <property type="generic name" value="CUDC-101"/>
</dbReference>
<dbReference type="DrugBank" id="DB11963">
    <property type="generic name" value="Dacomitinib"/>
</dbReference>
<dbReference type="DrugBank" id="DB12010">
    <property type="generic name" value="Fostamatinib"/>
</dbReference>
<dbReference type="DrugBank" id="DB04988">
    <property type="generic name" value="IGN311"/>
</dbReference>
<dbReference type="DrugBank" id="DB01259">
    <property type="generic name" value="Lapatinib"/>
</dbReference>
<dbReference type="DrugBank" id="DB14967">
    <property type="generic name" value="Margetuximab"/>
</dbReference>
<dbReference type="DrugBank" id="DB00179">
    <property type="generic name" value="Masoprocol"/>
</dbReference>
<dbReference type="DrugBank" id="DB04862">
    <property type="generic name" value="Merimepodib"/>
</dbReference>
<dbReference type="DrugBank" id="DB12682">
    <property type="generic name" value="Mubritinib"/>
</dbReference>
<dbReference type="DrugBank" id="DB06226">
    <property type="generic name" value="Nelipepimut-S"/>
</dbReference>
<dbReference type="DrugBank" id="DB11828">
    <property type="generic name" value="Neratinib"/>
</dbReference>
<dbReference type="DrugBank" id="DB07662">
    <property type="generic name" value="PD-168393"/>
</dbReference>
<dbReference type="DrugBank" id="DB06366">
    <property type="generic name" value="Pertuzumab"/>
</dbReference>
<dbReference type="DrugBank" id="DB12114">
    <property type="generic name" value="Poziotinib"/>
</dbReference>
<dbReference type="DrugBank" id="DB12183">
    <property type="generic name" value="Sapitinib"/>
</dbReference>
<dbReference type="DrugBank" id="DB14944">
    <property type="generic name" value="Tarloxotinib"/>
</dbReference>
<dbReference type="DrugBank" id="DB11973">
    <property type="generic name" value="Tesevatinib"/>
</dbReference>
<dbReference type="DrugBank" id="DB00072">
    <property type="generic name" value="Trastuzumab"/>
</dbReference>
<dbReference type="DrugBank" id="DB05773">
    <property type="generic name" value="Trastuzumab emtansine"/>
</dbReference>
<dbReference type="DrugBank" id="DB11652">
    <property type="generic name" value="Tucatinib"/>
</dbReference>
<dbReference type="DrugBank" id="DB05944">
    <property type="generic name" value="Varlitinib"/>
</dbReference>
<dbReference type="DrugBank" id="DB15471">
    <property type="generic name" value="Zanidatamab"/>
</dbReference>
<dbReference type="DrugBank" id="DB15035">
    <property type="generic name" value="Zanubrutinib"/>
</dbReference>
<dbReference type="DrugCentral" id="P04626"/>
<dbReference type="GuidetoPHARMACOLOGY" id="2019"/>
<dbReference type="MoonDB" id="P04626">
    <property type="type" value="Predicted"/>
</dbReference>
<dbReference type="TCDB" id="8.A.23.1.39">
    <property type="family name" value="the basigin (basigin) family"/>
</dbReference>
<dbReference type="CarbonylDB" id="P04626"/>
<dbReference type="GlyConnect" id="1710">
    <property type="glycosylation" value="13 N-Linked glycans (5 sites), 1 O-Linked glycan (1 site)"/>
</dbReference>
<dbReference type="GlyCosmos" id="P04626">
    <property type="glycosylation" value="9 sites, 13 glycans"/>
</dbReference>
<dbReference type="GlyGen" id="P04626">
    <property type="glycosylation" value="10 sites, 25 N-linked glycans (6 sites), 2 O-linked glycans (2 sites)"/>
</dbReference>
<dbReference type="iPTMnet" id="P04626"/>
<dbReference type="PhosphoSitePlus" id="P04626"/>
<dbReference type="SwissPalm" id="P04626"/>
<dbReference type="BioMuta" id="ERBB2"/>
<dbReference type="DMDM" id="119533"/>
<dbReference type="CPTAC" id="CPTAC-192"/>
<dbReference type="CPTAC" id="CPTAC-193"/>
<dbReference type="CPTAC" id="CPTAC-194"/>
<dbReference type="CPTAC" id="CPTAC-195"/>
<dbReference type="CPTAC" id="CPTAC-3045"/>
<dbReference type="CPTAC" id="CPTAC-3046"/>
<dbReference type="CPTAC" id="CPTAC-5777"/>
<dbReference type="CPTAC" id="CPTAC-5827"/>
<dbReference type="CPTAC" id="CPTAC-5839"/>
<dbReference type="CPTAC" id="CPTAC-5864"/>
<dbReference type="CPTAC" id="CPTAC-693"/>
<dbReference type="CPTAC" id="non-CPTAC-5384"/>
<dbReference type="CPTAC" id="non-CPTAC-5385"/>
<dbReference type="CPTAC" id="non-CPTAC-5386"/>
<dbReference type="CPTAC" id="non-CPTAC-5547"/>
<dbReference type="CPTAC" id="non-CPTAC-5732"/>
<dbReference type="CPTAC" id="non-CPTAC-5733"/>
<dbReference type="jPOST" id="P04626"/>
<dbReference type="MassIVE" id="P04626"/>
<dbReference type="PaxDb" id="9606-ENSP00000269571"/>
<dbReference type="PeptideAtlas" id="P04626"/>
<dbReference type="ProteomicsDB" id="51718">
    <molecule id="P04626-1"/>
</dbReference>
<dbReference type="ProteomicsDB" id="51719">
    <molecule id="P04626-2"/>
</dbReference>
<dbReference type="ProteomicsDB" id="51720">
    <molecule id="P04626-3"/>
</dbReference>
<dbReference type="ProteomicsDB" id="51721">
    <molecule id="P04626-4"/>
</dbReference>
<dbReference type="Pumba" id="P04626"/>
<dbReference type="ABCD" id="P04626">
    <property type="antibodies" value="341 sequenced antibodies"/>
</dbReference>
<dbReference type="Antibodypedia" id="740">
    <property type="antibodies" value="6638 antibodies from 63 providers"/>
</dbReference>
<dbReference type="CPTC" id="P04626">
    <property type="antibodies" value="4 antibodies"/>
</dbReference>
<dbReference type="DNASU" id="2064"/>
<dbReference type="Ensembl" id="ENST00000269571.10">
    <molecule id="P04626-1"/>
    <property type="protein sequence ID" value="ENSP00000269571.4"/>
    <property type="gene ID" value="ENSG00000141736.14"/>
</dbReference>
<dbReference type="Ensembl" id="ENST00000406381.6">
    <molecule id="P04626-5"/>
    <property type="protein sequence ID" value="ENSP00000385185.2"/>
    <property type="gene ID" value="ENSG00000141736.14"/>
</dbReference>
<dbReference type="Ensembl" id="ENST00000541774.5">
    <molecule id="P04626-4"/>
    <property type="protein sequence ID" value="ENSP00000446466.1"/>
    <property type="gene ID" value="ENSG00000141736.14"/>
</dbReference>
<dbReference type="Ensembl" id="ENST00000584601.5">
    <molecule id="P04626-5"/>
    <property type="protein sequence ID" value="ENSP00000462438.1"/>
    <property type="gene ID" value="ENSG00000141736.14"/>
</dbReference>
<dbReference type="GeneID" id="2064"/>
<dbReference type="KEGG" id="hsa:2064"/>
<dbReference type="MANE-Select" id="ENST00000269571.10">
    <property type="protein sequence ID" value="ENSP00000269571.4"/>
    <property type="RefSeq nucleotide sequence ID" value="NM_004448.4"/>
    <property type="RefSeq protein sequence ID" value="NP_004439.2"/>
</dbReference>
<dbReference type="UCSC" id="uc060esv.1">
    <molecule id="P04626-1"/>
    <property type="organism name" value="human"/>
</dbReference>
<dbReference type="AGR" id="HGNC:3430"/>
<dbReference type="CTD" id="2064"/>
<dbReference type="DisGeNET" id="2064"/>
<dbReference type="GeneCards" id="ERBB2"/>
<dbReference type="HGNC" id="HGNC:3430">
    <property type="gene designation" value="ERBB2"/>
</dbReference>
<dbReference type="HPA" id="ENSG00000141736">
    <property type="expression patterns" value="Low tissue specificity"/>
</dbReference>
<dbReference type="MalaCards" id="ERBB2"/>
<dbReference type="MIM" id="137800">
    <property type="type" value="phenotype"/>
</dbReference>
<dbReference type="MIM" id="164870">
    <property type="type" value="gene"/>
</dbReference>
<dbReference type="MIM" id="167000">
    <property type="type" value="phenotype"/>
</dbReference>
<dbReference type="MIM" id="211980">
    <property type="type" value="phenotype"/>
</dbReference>
<dbReference type="MIM" id="613659">
    <property type="type" value="phenotype"/>
</dbReference>
<dbReference type="MIM" id="619465">
    <property type="type" value="phenotype"/>
</dbReference>
<dbReference type="neXtProt" id="NX_P04626"/>
<dbReference type="OpenTargets" id="ENSG00000141736"/>
<dbReference type="Orphanet" id="99976">
    <property type="disease" value="Adenocarcinoma of the oesophagus and oesophagogastric junction"/>
</dbReference>
<dbReference type="Orphanet" id="2800">
    <property type="disease" value="Extramammary Paget disease"/>
</dbReference>
<dbReference type="Orphanet" id="388">
    <property type="disease" value="Hirschsprung disease"/>
</dbReference>
<dbReference type="Orphanet" id="213726">
    <property type="disease" value="Serous carcinoma of the corpus uteri"/>
</dbReference>
<dbReference type="PharmGKB" id="PA27844"/>
<dbReference type="VEuPathDB" id="HostDB:ENSG00000141736"/>
<dbReference type="eggNOG" id="KOG1025">
    <property type="taxonomic scope" value="Eukaryota"/>
</dbReference>
<dbReference type="GeneTree" id="ENSGT00940000158232"/>
<dbReference type="InParanoid" id="P04626"/>
<dbReference type="OMA" id="DRHCLPC"/>
<dbReference type="OrthoDB" id="6219513at2759"/>
<dbReference type="PAN-GO" id="P04626">
    <property type="GO annotations" value="10 GO annotations based on evolutionary models"/>
</dbReference>
<dbReference type="PhylomeDB" id="P04626"/>
<dbReference type="TreeFam" id="TF106002"/>
<dbReference type="BRENDA" id="2.7.10.1">
    <property type="organism ID" value="2681"/>
</dbReference>
<dbReference type="PathwayCommons" id="P04626"/>
<dbReference type="Reactome" id="R-HSA-1227986">
    <property type="pathway name" value="Signaling by ERBB2"/>
</dbReference>
<dbReference type="Reactome" id="R-HSA-1250196">
    <property type="pathway name" value="SHC1 events in ERBB2 signaling"/>
</dbReference>
<dbReference type="Reactome" id="R-HSA-1251932">
    <property type="pathway name" value="PLCG1 events in ERBB2 signaling"/>
</dbReference>
<dbReference type="Reactome" id="R-HSA-1257604">
    <property type="pathway name" value="PIP3 activates AKT signaling"/>
</dbReference>
<dbReference type="Reactome" id="R-HSA-1306955">
    <property type="pathway name" value="GRB7 events in ERBB2 signaling"/>
</dbReference>
<dbReference type="Reactome" id="R-HSA-1358803">
    <property type="pathway name" value="Downregulation of ERBB2:ERBB3 signaling"/>
</dbReference>
<dbReference type="Reactome" id="R-HSA-1963640">
    <property type="pathway name" value="GRB2 events in ERBB2 signaling"/>
</dbReference>
<dbReference type="Reactome" id="R-HSA-1963642">
    <property type="pathway name" value="PI3K events in ERBB2 signaling"/>
</dbReference>
<dbReference type="Reactome" id="R-HSA-2219530">
    <property type="pathway name" value="Constitutive Signaling by Aberrant PI3K in Cancer"/>
</dbReference>
<dbReference type="Reactome" id="R-HSA-416572">
    <property type="pathway name" value="Sema4D induced cell migration and growth-cone collapse"/>
</dbReference>
<dbReference type="Reactome" id="R-HSA-5673001">
    <property type="pathway name" value="RAF/MAP kinase cascade"/>
</dbReference>
<dbReference type="Reactome" id="R-HSA-6785631">
    <property type="pathway name" value="ERBB2 Regulates Cell Motility"/>
</dbReference>
<dbReference type="Reactome" id="R-HSA-6811558">
    <property type="pathway name" value="PI5P, PP2A and IER3 Regulate PI3K/AKT Signaling"/>
</dbReference>
<dbReference type="Reactome" id="R-HSA-8847993">
    <property type="pathway name" value="ERBB2 Activates PTK6 Signaling"/>
</dbReference>
<dbReference type="Reactome" id="R-HSA-8863795">
    <property type="pathway name" value="Downregulation of ERBB2 signaling"/>
</dbReference>
<dbReference type="Reactome" id="R-HSA-8866910">
    <property type="pathway name" value="TFAP2 (AP-2) family regulates transcription of growth factors and their receptors"/>
</dbReference>
<dbReference type="Reactome" id="R-HSA-9634285">
    <property type="pathway name" value="Constitutive Signaling by Overexpressed ERBB2"/>
</dbReference>
<dbReference type="Reactome" id="R-HSA-9652282">
    <property type="pathway name" value="Drug-mediated inhibition of ERBB2 signaling"/>
</dbReference>
<dbReference type="Reactome" id="R-HSA-9664565">
    <property type="pathway name" value="Signaling by ERBB2 KD Mutants"/>
</dbReference>
<dbReference type="Reactome" id="R-HSA-9665233">
    <property type="pathway name" value="Resistance of ERBB2 KD mutants to trastuzumab"/>
</dbReference>
<dbReference type="Reactome" id="R-HSA-9665244">
    <property type="pathway name" value="Resistance of ERBB2 KD mutants to sapitinib"/>
</dbReference>
<dbReference type="Reactome" id="R-HSA-9665245">
    <property type="pathway name" value="Resistance of ERBB2 KD mutants to tesevatinib"/>
</dbReference>
<dbReference type="Reactome" id="R-HSA-9665246">
    <property type="pathway name" value="Resistance of ERBB2 KD mutants to neratinib"/>
</dbReference>
<dbReference type="Reactome" id="R-HSA-9665247">
    <property type="pathway name" value="Resistance of ERBB2 KD mutants to osimertinib"/>
</dbReference>
<dbReference type="Reactome" id="R-HSA-9665249">
    <property type="pathway name" value="Resistance of ERBB2 KD mutants to afatinib"/>
</dbReference>
<dbReference type="Reactome" id="R-HSA-9665250">
    <property type="pathway name" value="Resistance of ERBB2 KD mutants to AEE788"/>
</dbReference>
<dbReference type="Reactome" id="R-HSA-9665251">
    <property type="pathway name" value="Resistance of ERBB2 KD mutants to lapatinib"/>
</dbReference>
<dbReference type="Reactome" id="R-HSA-9665348">
    <property type="pathway name" value="Signaling by ERBB2 ECD mutants"/>
</dbReference>
<dbReference type="Reactome" id="R-HSA-9665686">
    <property type="pathway name" value="Signaling by ERBB2 TMD/JMD mutants"/>
</dbReference>
<dbReference type="Reactome" id="R-HSA-9665737">
    <property type="pathway name" value="Drug resistance in ERBB2 TMD/JMD mutants"/>
</dbReference>
<dbReference type="SignaLink" id="P04626"/>
<dbReference type="SIGNOR" id="P04626"/>
<dbReference type="BioGRID-ORCS" id="2064">
    <property type="hits" value="92 hits in 1209 CRISPR screens"/>
</dbReference>
<dbReference type="ChiTaRS" id="ERBB2">
    <property type="organism name" value="human"/>
</dbReference>
<dbReference type="EvolutionaryTrace" id="P04626"/>
<dbReference type="GeneWiki" id="HER2/neu"/>
<dbReference type="GenomeRNAi" id="2064"/>
<dbReference type="Pharos" id="P04626">
    <property type="development level" value="Tclin"/>
</dbReference>
<dbReference type="PRO" id="PR:P04626"/>
<dbReference type="Proteomes" id="UP000005640">
    <property type="component" value="Chromosome 17"/>
</dbReference>
<dbReference type="RNAct" id="P04626">
    <property type="molecule type" value="protein"/>
</dbReference>
<dbReference type="Bgee" id="ENSG00000141736">
    <property type="expression patterns" value="Expressed in lower esophagus mucosa and 186 other cell types or tissues"/>
</dbReference>
<dbReference type="ExpressionAtlas" id="P04626">
    <property type="expression patterns" value="baseline and differential"/>
</dbReference>
<dbReference type="GO" id="GO:0016324">
    <property type="term" value="C:apical plasma membrane"/>
    <property type="evidence" value="ECO:0007669"/>
    <property type="project" value="Ensembl"/>
</dbReference>
<dbReference type="GO" id="GO:0009925">
    <property type="term" value="C:basal plasma membrane"/>
    <property type="evidence" value="ECO:0000318"/>
    <property type="project" value="GO_Central"/>
</dbReference>
<dbReference type="GO" id="GO:0016323">
    <property type="term" value="C:basolateral plasma membrane"/>
    <property type="evidence" value="ECO:0000314"/>
    <property type="project" value="BHF-UCL"/>
</dbReference>
<dbReference type="GO" id="GO:0005829">
    <property type="term" value="C:cytosol"/>
    <property type="evidence" value="ECO:0000314"/>
    <property type="project" value="HPA"/>
</dbReference>
<dbReference type="GO" id="GO:0005769">
    <property type="term" value="C:early endosome"/>
    <property type="evidence" value="ECO:0007669"/>
    <property type="project" value="UniProtKB-SubCell"/>
</dbReference>
<dbReference type="GO" id="GO:0010008">
    <property type="term" value="C:endosome membrane"/>
    <property type="evidence" value="ECO:0000314"/>
    <property type="project" value="UniProtKB"/>
</dbReference>
<dbReference type="GO" id="GO:0038143">
    <property type="term" value="C:ERBB3:ERBB2 complex"/>
    <property type="evidence" value="ECO:0000314"/>
    <property type="project" value="UniProtKB"/>
</dbReference>
<dbReference type="GO" id="GO:0016020">
    <property type="term" value="C:membrane"/>
    <property type="evidence" value="ECO:0000303"/>
    <property type="project" value="UniProtKB"/>
</dbReference>
<dbReference type="GO" id="GO:0043209">
    <property type="term" value="C:myelin sheath"/>
    <property type="evidence" value="ECO:0007669"/>
    <property type="project" value="Ensembl"/>
</dbReference>
<dbReference type="GO" id="GO:0031594">
    <property type="term" value="C:neuromuscular junction"/>
    <property type="evidence" value="ECO:0007669"/>
    <property type="project" value="Ensembl"/>
</dbReference>
<dbReference type="GO" id="GO:0005654">
    <property type="term" value="C:nucleoplasm"/>
    <property type="evidence" value="ECO:0000314"/>
    <property type="project" value="HPA"/>
</dbReference>
<dbReference type="GO" id="GO:0005634">
    <property type="term" value="C:nucleus"/>
    <property type="evidence" value="ECO:0000314"/>
    <property type="project" value="UniProtKB"/>
</dbReference>
<dbReference type="GO" id="GO:0048471">
    <property type="term" value="C:perinuclear region of cytoplasm"/>
    <property type="evidence" value="ECO:0007669"/>
    <property type="project" value="UniProtKB-SubCell"/>
</dbReference>
<dbReference type="GO" id="GO:0005886">
    <property type="term" value="C:plasma membrane"/>
    <property type="evidence" value="ECO:0000314"/>
    <property type="project" value="HPA"/>
</dbReference>
<dbReference type="GO" id="GO:0042734">
    <property type="term" value="C:presynaptic membrane"/>
    <property type="evidence" value="ECO:0007669"/>
    <property type="project" value="Ensembl"/>
</dbReference>
<dbReference type="GO" id="GO:0043235">
    <property type="term" value="C:receptor complex"/>
    <property type="evidence" value="ECO:0000314"/>
    <property type="project" value="MGI"/>
</dbReference>
<dbReference type="GO" id="GO:0032587">
    <property type="term" value="C:ruffle membrane"/>
    <property type="evidence" value="ECO:0007669"/>
    <property type="project" value="UniProtKB-SubCell"/>
</dbReference>
<dbReference type="GO" id="GO:0002116">
    <property type="term" value="C:semaphorin receptor complex"/>
    <property type="evidence" value="ECO:0000250"/>
    <property type="project" value="BHF-UCL"/>
</dbReference>
<dbReference type="GO" id="GO:0005524">
    <property type="term" value="F:ATP binding"/>
    <property type="evidence" value="ECO:0007669"/>
    <property type="project" value="UniProtKB-KW"/>
</dbReference>
<dbReference type="GO" id="GO:0015026">
    <property type="term" value="F:coreceptor activity"/>
    <property type="evidence" value="ECO:0000250"/>
    <property type="project" value="BHF-UCL"/>
</dbReference>
<dbReference type="GO" id="GO:0043125">
    <property type="term" value="F:ErbB-3 class receptor binding"/>
    <property type="evidence" value="ECO:0000353"/>
    <property type="project" value="UniProtKB"/>
</dbReference>
<dbReference type="GO" id="GO:0042802">
    <property type="term" value="F:identical protein binding"/>
    <property type="evidence" value="ECO:0000353"/>
    <property type="project" value="UniProtKB"/>
</dbReference>
<dbReference type="GO" id="GO:0046982">
    <property type="term" value="F:protein heterodimerization activity"/>
    <property type="evidence" value="ECO:0000353"/>
    <property type="project" value="BHF-UCL"/>
</dbReference>
<dbReference type="GO" id="GO:0004713">
    <property type="term" value="F:protein tyrosine kinase activity"/>
    <property type="evidence" value="ECO:0000314"/>
    <property type="project" value="UniProtKB"/>
</dbReference>
<dbReference type="GO" id="GO:0030971">
    <property type="term" value="F:receptor tyrosine kinase binding"/>
    <property type="evidence" value="ECO:0000353"/>
    <property type="project" value="BHF-UCL"/>
</dbReference>
<dbReference type="GO" id="GO:0001042">
    <property type="term" value="F:RNA polymerase I core binding"/>
    <property type="evidence" value="ECO:0000314"/>
    <property type="project" value="UniProtKB"/>
</dbReference>
<dbReference type="GO" id="GO:0005102">
    <property type="term" value="F:signaling receptor binding"/>
    <property type="evidence" value="ECO:0000353"/>
    <property type="project" value="BHF-UCL"/>
</dbReference>
<dbReference type="GO" id="GO:0004714">
    <property type="term" value="F:transmembrane receptor protein tyrosine kinase activity"/>
    <property type="evidence" value="ECO:0000314"/>
    <property type="project" value="BHF-UCL"/>
</dbReference>
<dbReference type="GO" id="GO:0004888">
    <property type="term" value="F:transmembrane signaling receptor activity"/>
    <property type="evidence" value="ECO:0000314"/>
    <property type="project" value="BHF-UCL"/>
</dbReference>
<dbReference type="GO" id="GO:0008283">
    <property type="term" value="P:cell population proliferation"/>
    <property type="evidence" value="ECO:0000314"/>
    <property type="project" value="UniProt"/>
</dbReference>
<dbReference type="GO" id="GO:0007169">
    <property type="term" value="P:cell surface receptor protein tyrosine kinase signaling pathway"/>
    <property type="evidence" value="ECO:0000314"/>
    <property type="project" value="BHF-UCL"/>
</dbReference>
<dbReference type="GO" id="GO:0007166">
    <property type="term" value="P:cell surface receptor signaling pathway"/>
    <property type="evidence" value="ECO:0000314"/>
    <property type="project" value="MGI"/>
</dbReference>
<dbReference type="GO" id="GO:0071364">
    <property type="term" value="P:cellular response to epidermal growth factor stimulus"/>
    <property type="evidence" value="ECO:0000315"/>
    <property type="project" value="UniProtKB"/>
</dbReference>
<dbReference type="GO" id="GO:0071363">
    <property type="term" value="P:cellular response to growth factor stimulus"/>
    <property type="evidence" value="ECO:0000314"/>
    <property type="project" value="UniProtKB"/>
</dbReference>
<dbReference type="GO" id="GO:0007167">
    <property type="term" value="P:enzyme-linked receptor protein signaling pathway"/>
    <property type="evidence" value="ECO:0000304"/>
    <property type="project" value="ProtInc"/>
</dbReference>
<dbReference type="GO" id="GO:0007173">
    <property type="term" value="P:epidermal growth factor receptor signaling pathway"/>
    <property type="evidence" value="ECO:0000318"/>
    <property type="project" value="GO_Central"/>
</dbReference>
<dbReference type="GO" id="GO:0038134">
    <property type="term" value="P:ERBB2-EGFR signaling pathway"/>
    <property type="evidence" value="ECO:0000314"/>
    <property type="project" value="MGI"/>
</dbReference>
<dbReference type="GO" id="GO:0038133">
    <property type="term" value="P:ERBB2-ERBB3 signaling pathway"/>
    <property type="evidence" value="ECO:0007669"/>
    <property type="project" value="Ensembl"/>
</dbReference>
<dbReference type="GO" id="GO:0038135">
    <property type="term" value="P:ERBB2-ERBB4 signaling pathway"/>
    <property type="evidence" value="ECO:0007669"/>
    <property type="project" value="Ensembl"/>
</dbReference>
<dbReference type="GO" id="GO:0007507">
    <property type="term" value="P:heart development"/>
    <property type="evidence" value="ECO:0007669"/>
    <property type="project" value="Ensembl"/>
</dbReference>
<dbReference type="GO" id="GO:0033080">
    <property type="term" value="P:immature T cell proliferation in thymus"/>
    <property type="evidence" value="ECO:0007669"/>
    <property type="project" value="Ensembl"/>
</dbReference>
<dbReference type="GO" id="GO:0035556">
    <property type="term" value="P:intracellular signal transduction"/>
    <property type="evidence" value="ECO:0000314"/>
    <property type="project" value="UniProtKB"/>
</dbReference>
<dbReference type="GO" id="GO:0008045">
    <property type="term" value="P:motor neuron axon guidance"/>
    <property type="evidence" value="ECO:0007669"/>
    <property type="project" value="Ensembl"/>
</dbReference>
<dbReference type="GO" id="GO:0042552">
    <property type="term" value="P:myelination"/>
    <property type="evidence" value="ECO:0007669"/>
    <property type="project" value="Ensembl"/>
</dbReference>
<dbReference type="GO" id="GO:0043066">
    <property type="term" value="P:negative regulation of apoptotic process"/>
    <property type="evidence" value="ECO:0000318"/>
    <property type="project" value="GO_Central"/>
</dbReference>
<dbReference type="GO" id="GO:0033088">
    <property type="term" value="P:negative regulation of immature T cell proliferation in thymus"/>
    <property type="evidence" value="ECO:0007669"/>
    <property type="project" value="Ensembl"/>
</dbReference>
<dbReference type="GO" id="GO:0007528">
    <property type="term" value="P:neuromuscular junction development"/>
    <property type="evidence" value="ECO:0007669"/>
    <property type="project" value="Ensembl"/>
</dbReference>
<dbReference type="GO" id="GO:0030182">
    <property type="term" value="P:neuron differentiation"/>
    <property type="evidence" value="ECO:0000318"/>
    <property type="project" value="GO_Central"/>
</dbReference>
<dbReference type="GO" id="GO:0099645">
    <property type="term" value="P:neurotransmitter receptor localization to postsynaptic specialization membrane"/>
    <property type="evidence" value="ECO:0007669"/>
    <property type="project" value="Ensembl"/>
</dbReference>
<dbReference type="GO" id="GO:0048709">
    <property type="term" value="P:oligodendrocyte differentiation"/>
    <property type="evidence" value="ECO:0007669"/>
    <property type="project" value="Ensembl"/>
</dbReference>
<dbReference type="GO" id="GO:0018108">
    <property type="term" value="P:peptidyl-tyrosine phosphorylation"/>
    <property type="evidence" value="ECO:0000314"/>
    <property type="project" value="UniProtKB"/>
</dbReference>
<dbReference type="GO" id="GO:0043491">
    <property type="term" value="P:phosphatidylinositol 3-kinase/protein kinase B signal transduction"/>
    <property type="evidence" value="ECO:0000314"/>
    <property type="project" value="BHF-UCL"/>
</dbReference>
<dbReference type="GO" id="GO:0045785">
    <property type="term" value="P:positive regulation of cell adhesion"/>
    <property type="evidence" value="ECO:0000314"/>
    <property type="project" value="BHF-UCL"/>
</dbReference>
<dbReference type="GO" id="GO:0030307">
    <property type="term" value="P:positive regulation of cell growth"/>
    <property type="evidence" value="ECO:0000315"/>
    <property type="project" value="UniProtKB"/>
</dbReference>
<dbReference type="GO" id="GO:0050679">
    <property type="term" value="P:positive regulation of epithelial cell proliferation"/>
    <property type="evidence" value="ECO:0000314"/>
    <property type="project" value="UniProtKB"/>
</dbReference>
<dbReference type="GO" id="GO:0043406">
    <property type="term" value="P:positive regulation of MAP kinase activity"/>
    <property type="evidence" value="ECO:0000314"/>
    <property type="project" value="UniProtKB"/>
</dbReference>
<dbReference type="GO" id="GO:0043410">
    <property type="term" value="P:positive regulation of MAPK cascade"/>
    <property type="evidence" value="ECO:0000318"/>
    <property type="project" value="GO_Central"/>
</dbReference>
<dbReference type="GO" id="GO:0090314">
    <property type="term" value="P:positive regulation of protein targeting to membrane"/>
    <property type="evidence" value="ECO:0000314"/>
    <property type="project" value="UniProtKB"/>
</dbReference>
<dbReference type="GO" id="GO:0035025">
    <property type="term" value="P:positive regulation of Rho protein signal transduction"/>
    <property type="evidence" value="ECO:0000250"/>
    <property type="project" value="BHF-UCL"/>
</dbReference>
<dbReference type="GO" id="GO:0045943">
    <property type="term" value="P:positive regulation of transcription by RNA polymerase I"/>
    <property type="evidence" value="ECO:0000315"/>
    <property type="project" value="UniProtKB"/>
</dbReference>
<dbReference type="GO" id="GO:0045727">
    <property type="term" value="P:positive regulation of translation"/>
    <property type="evidence" value="ECO:0000315"/>
    <property type="project" value="UniProtKB"/>
</dbReference>
<dbReference type="GO" id="GO:0006468">
    <property type="term" value="P:protein phosphorylation"/>
    <property type="evidence" value="ECO:0000304"/>
    <property type="project" value="ProtInc"/>
</dbReference>
<dbReference type="GO" id="GO:0045765">
    <property type="term" value="P:regulation of angiogenesis"/>
    <property type="evidence" value="ECO:0000303"/>
    <property type="project" value="UniProtKB"/>
</dbReference>
<dbReference type="GO" id="GO:0070372">
    <property type="term" value="P:regulation of ERK1 and ERK2 cascade"/>
    <property type="evidence" value="ECO:0000315"/>
    <property type="project" value="UniProtKB"/>
</dbReference>
<dbReference type="GO" id="GO:0032886">
    <property type="term" value="P:regulation of microtubule-based process"/>
    <property type="evidence" value="ECO:0000314"/>
    <property type="project" value="UniProtKB"/>
</dbReference>
<dbReference type="GO" id="GO:0014044">
    <property type="term" value="P:Schwann cell development"/>
    <property type="evidence" value="ECO:0007669"/>
    <property type="project" value="Ensembl"/>
</dbReference>
<dbReference type="GO" id="GO:0071526">
    <property type="term" value="P:semaphorin-plexin signaling pathway"/>
    <property type="evidence" value="ECO:0000250"/>
    <property type="project" value="BHF-UCL"/>
</dbReference>
<dbReference type="GO" id="GO:0007165">
    <property type="term" value="P:signal transduction"/>
    <property type="evidence" value="ECO:0000314"/>
    <property type="project" value="UniProtKB"/>
</dbReference>
<dbReference type="GO" id="GO:0042060">
    <property type="term" value="P:wound healing"/>
    <property type="evidence" value="ECO:0000314"/>
    <property type="project" value="BHF-UCL"/>
</dbReference>
<dbReference type="CDD" id="cd00064">
    <property type="entry name" value="FU"/>
    <property type="match status" value="3"/>
</dbReference>
<dbReference type="CDD" id="cd05109">
    <property type="entry name" value="PTKc_HER2"/>
    <property type="match status" value="1"/>
</dbReference>
<dbReference type="CDD" id="cd12094">
    <property type="entry name" value="TM_ErbB2"/>
    <property type="match status" value="1"/>
</dbReference>
<dbReference type="DisProt" id="DP01484"/>
<dbReference type="FunFam" id="1.20.5.100:FF:000007">
    <property type="entry name" value="Receptor protein-tyrosine kinase"/>
    <property type="match status" value="1"/>
</dbReference>
<dbReference type="FunFam" id="2.10.220.10:FF:000009">
    <property type="entry name" value="Receptor protein-tyrosine kinase"/>
    <property type="match status" value="1"/>
</dbReference>
<dbReference type="FunFam" id="2.10.220.10:FF:000010">
    <property type="entry name" value="Receptor protein-tyrosine kinase"/>
    <property type="match status" value="1"/>
</dbReference>
<dbReference type="FunFam" id="3.30.200.20:FF:000184">
    <property type="entry name" value="Receptor protein-tyrosine kinase"/>
    <property type="match status" value="1"/>
</dbReference>
<dbReference type="FunFam" id="3.80.20.20:FF:000007">
    <property type="entry name" value="Receptor protein-tyrosine kinase"/>
    <property type="match status" value="1"/>
</dbReference>
<dbReference type="FunFam" id="3.80.20.20:FF:000008">
    <property type="entry name" value="Receptor protein-tyrosine kinase"/>
    <property type="match status" value="1"/>
</dbReference>
<dbReference type="FunFam" id="4.10.1140.10:FF:000001">
    <property type="entry name" value="Receptor protein-tyrosine kinase"/>
    <property type="match status" value="1"/>
</dbReference>
<dbReference type="FunFam" id="1.10.510.10:FF:002828">
    <property type="entry name" value="Receptor tyrosine-protein kinase erbB-2"/>
    <property type="match status" value="1"/>
</dbReference>
<dbReference type="Gene3D" id="1.20.5.100">
    <property type="entry name" value="Cytochrome c1, transmembrane anchor, C-terminal"/>
    <property type="match status" value="1"/>
</dbReference>
<dbReference type="Gene3D" id="2.10.220.10">
    <property type="entry name" value="Hormone Receptor, Insulin-like Growth Factor Receptor 1, Chain A, domain 2"/>
    <property type="match status" value="3"/>
</dbReference>
<dbReference type="Gene3D" id="4.10.1140.10">
    <property type="entry name" value="membrane-bound form of the juxtamembrane domain of the epidermal growth factor receptor like domain"/>
    <property type="match status" value="1"/>
</dbReference>
<dbReference type="Gene3D" id="3.30.200.20">
    <property type="entry name" value="Phosphorylase Kinase, domain 1"/>
    <property type="match status" value="1"/>
</dbReference>
<dbReference type="Gene3D" id="3.80.20.20">
    <property type="entry name" value="Receptor L-domain"/>
    <property type="match status" value="2"/>
</dbReference>
<dbReference type="Gene3D" id="1.10.510.10">
    <property type="entry name" value="Transferase(Phosphotransferase) domain 1"/>
    <property type="match status" value="1"/>
</dbReference>
<dbReference type="IDEAL" id="IID00293"/>
<dbReference type="InterPro" id="IPR006211">
    <property type="entry name" value="Furin-like_Cys-rich_dom"/>
</dbReference>
<dbReference type="InterPro" id="IPR006212">
    <property type="entry name" value="Furin_repeat"/>
</dbReference>
<dbReference type="InterPro" id="IPR032778">
    <property type="entry name" value="GF_recep_IV"/>
</dbReference>
<dbReference type="InterPro" id="IPR009030">
    <property type="entry name" value="Growth_fac_rcpt_cys_sf"/>
</dbReference>
<dbReference type="InterPro" id="IPR011009">
    <property type="entry name" value="Kinase-like_dom_sf"/>
</dbReference>
<dbReference type="InterPro" id="IPR000719">
    <property type="entry name" value="Prot_kinase_dom"/>
</dbReference>
<dbReference type="InterPro" id="IPR017441">
    <property type="entry name" value="Protein_kinase_ATP_BS"/>
</dbReference>
<dbReference type="InterPro" id="IPR000494">
    <property type="entry name" value="Rcpt_L-dom"/>
</dbReference>
<dbReference type="InterPro" id="IPR036941">
    <property type="entry name" value="Rcpt_L-dom_sf"/>
</dbReference>
<dbReference type="InterPro" id="IPR050122">
    <property type="entry name" value="RTK"/>
</dbReference>
<dbReference type="InterPro" id="IPR001245">
    <property type="entry name" value="Ser-Thr/Tyr_kinase_cat_dom"/>
</dbReference>
<dbReference type="InterPro" id="IPR049328">
    <property type="entry name" value="TM_ErbB1"/>
</dbReference>
<dbReference type="InterPro" id="IPR008266">
    <property type="entry name" value="Tyr_kinase_AS"/>
</dbReference>
<dbReference type="InterPro" id="IPR020635">
    <property type="entry name" value="Tyr_kinase_cat_dom"/>
</dbReference>
<dbReference type="InterPro" id="IPR016245">
    <property type="entry name" value="Tyr_kinase_EGF/ERB/XmrK_rcpt"/>
</dbReference>
<dbReference type="PANTHER" id="PTHR24416:SF137">
    <property type="entry name" value="RECEPTOR TYROSINE-PROTEIN KINASE ERBB-2"/>
    <property type="match status" value="1"/>
</dbReference>
<dbReference type="PANTHER" id="PTHR24416">
    <property type="entry name" value="TYROSINE-PROTEIN KINASE RECEPTOR"/>
    <property type="match status" value="1"/>
</dbReference>
<dbReference type="Pfam" id="PF00757">
    <property type="entry name" value="Furin-like"/>
    <property type="match status" value="1"/>
</dbReference>
<dbReference type="Pfam" id="PF14843">
    <property type="entry name" value="GF_recep_IV"/>
    <property type="match status" value="1"/>
</dbReference>
<dbReference type="Pfam" id="PF07714">
    <property type="entry name" value="PK_Tyr_Ser-Thr"/>
    <property type="match status" value="1"/>
</dbReference>
<dbReference type="Pfam" id="PF01030">
    <property type="entry name" value="Recep_L_domain"/>
    <property type="match status" value="2"/>
</dbReference>
<dbReference type="Pfam" id="PF21314">
    <property type="entry name" value="TM_ErbB1"/>
    <property type="match status" value="1"/>
</dbReference>
<dbReference type="PIRSF" id="PIRSF000619">
    <property type="entry name" value="TyrPK_EGF-R"/>
    <property type="match status" value="1"/>
</dbReference>
<dbReference type="PRINTS" id="PR00109">
    <property type="entry name" value="TYRKINASE"/>
</dbReference>
<dbReference type="SMART" id="SM00261">
    <property type="entry name" value="FU"/>
    <property type="match status" value="3"/>
</dbReference>
<dbReference type="SMART" id="SM00219">
    <property type="entry name" value="TyrKc"/>
    <property type="match status" value="1"/>
</dbReference>
<dbReference type="SUPFAM" id="SSF57184">
    <property type="entry name" value="Growth factor receptor domain"/>
    <property type="match status" value="2"/>
</dbReference>
<dbReference type="SUPFAM" id="SSF52058">
    <property type="entry name" value="L domain-like"/>
    <property type="match status" value="2"/>
</dbReference>
<dbReference type="SUPFAM" id="SSF56112">
    <property type="entry name" value="Protein kinase-like (PK-like)"/>
    <property type="match status" value="1"/>
</dbReference>
<dbReference type="PROSITE" id="PS00107">
    <property type="entry name" value="PROTEIN_KINASE_ATP"/>
    <property type="match status" value="1"/>
</dbReference>
<dbReference type="PROSITE" id="PS50011">
    <property type="entry name" value="PROTEIN_KINASE_DOM"/>
    <property type="match status" value="1"/>
</dbReference>
<dbReference type="PROSITE" id="PS00109">
    <property type="entry name" value="PROTEIN_KINASE_TYR"/>
    <property type="match status" value="1"/>
</dbReference>
<organism>
    <name type="scientific">Homo sapiens</name>
    <name type="common">Human</name>
    <dbReference type="NCBI Taxonomy" id="9606"/>
    <lineage>
        <taxon>Eukaryota</taxon>
        <taxon>Metazoa</taxon>
        <taxon>Chordata</taxon>
        <taxon>Craniata</taxon>
        <taxon>Vertebrata</taxon>
        <taxon>Euteleostomi</taxon>
        <taxon>Mammalia</taxon>
        <taxon>Eutheria</taxon>
        <taxon>Euarchontoglires</taxon>
        <taxon>Primates</taxon>
        <taxon>Haplorrhini</taxon>
        <taxon>Catarrhini</taxon>
        <taxon>Hominidae</taxon>
        <taxon>Homo</taxon>
    </lineage>
</organism>
<evidence type="ECO:0000250" key="1">
    <source>
        <dbReference type="UniProtKB" id="P06494"/>
    </source>
</evidence>
<evidence type="ECO:0000250" key="2">
    <source>
        <dbReference type="UniProtKB" id="P70424"/>
    </source>
</evidence>
<evidence type="ECO:0000255" key="3"/>
<evidence type="ECO:0000255" key="4">
    <source>
        <dbReference type="PROSITE-ProRule" id="PRU00159"/>
    </source>
</evidence>
<evidence type="ECO:0000255" key="5">
    <source>
        <dbReference type="PROSITE-ProRule" id="PRU10028"/>
    </source>
</evidence>
<evidence type="ECO:0000256" key="6">
    <source>
        <dbReference type="SAM" id="MobiDB-lite"/>
    </source>
</evidence>
<evidence type="ECO:0000269" key="7">
    <source>
    </source>
</evidence>
<evidence type="ECO:0000269" key="8">
    <source>
    </source>
</evidence>
<evidence type="ECO:0000269" key="9">
    <source>
    </source>
</evidence>
<evidence type="ECO:0000269" key="10">
    <source>
    </source>
</evidence>
<evidence type="ECO:0000269" key="11">
    <source>
    </source>
</evidence>
<evidence type="ECO:0000269" key="12">
    <source>
    </source>
</evidence>
<evidence type="ECO:0000269" key="13">
    <source>
    </source>
</evidence>
<evidence type="ECO:0000269" key="14">
    <source>
    </source>
</evidence>
<evidence type="ECO:0000269" key="15">
    <source>
    </source>
</evidence>
<evidence type="ECO:0000269" key="16">
    <source>
    </source>
</evidence>
<evidence type="ECO:0000269" key="17">
    <source>
    </source>
</evidence>
<evidence type="ECO:0000269" key="18">
    <source>
    </source>
</evidence>
<evidence type="ECO:0000269" key="19">
    <source>
    </source>
</evidence>
<evidence type="ECO:0000269" key="20">
    <source>
    </source>
</evidence>
<evidence type="ECO:0000269" key="21">
    <source>
    </source>
</evidence>
<evidence type="ECO:0000269" key="22">
    <source>
    </source>
</evidence>
<evidence type="ECO:0000269" key="23">
    <source>
    </source>
</evidence>
<evidence type="ECO:0000269" key="24">
    <source>
    </source>
</evidence>
<evidence type="ECO:0000269" key="25">
    <source>
    </source>
</evidence>
<evidence type="ECO:0000269" key="26">
    <source>
    </source>
</evidence>
<evidence type="ECO:0000269" key="27">
    <source>
    </source>
</evidence>
<evidence type="ECO:0000269" key="28">
    <source>
    </source>
</evidence>
<evidence type="ECO:0000269" key="29">
    <source>
    </source>
</evidence>
<evidence type="ECO:0000269" key="30">
    <source>
    </source>
</evidence>
<evidence type="ECO:0000269" key="31">
    <source>
    </source>
</evidence>
<evidence type="ECO:0000269" key="32">
    <source>
    </source>
</evidence>
<evidence type="ECO:0000269" key="33">
    <source>
    </source>
</evidence>
<evidence type="ECO:0000269" key="34">
    <source>
    </source>
</evidence>
<evidence type="ECO:0000269" key="35">
    <source>
    </source>
</evidence>
<evidence type="ECO:0000269" key="36">
    <source>
    </source>
</evidence>
<evidence type="ECO:0000269" key="37">
    <source>
    </source>
</evidence>
<evidence type="ECO:0000269" key="38">
    <source>
    </source>
</evidence>
<evidence type="ECO:0000269" key="39">
    <source ref="3"/>
</evidence>
<evidence type="ECO:0000303" key="40">
    <source>
    </source>
</evidence>
<evidence type="ECO:0000303" key="41">
    <source ref="4"/>
</evidence>
<evidence type="ECO:0000305" key="42"/>
<evidence type="ECO:0000305" key="43">
    <source>
    </source>
</evidence>
<evidence type="ECO:0007744" key="44">
    <source>
        <dbReference type="PDB" id="1N8Z"/>
    </source>
</evidence>
<evidence type="ECO:0007744" key="45">
    <source>
        <dbReference type="PDB" id="1S78"/>
    </source>
</evidence>
<evidence type="ECO:0007744" key="46">
    <source>
        <dbReference type="PDB" id="2A91"/>
    </source>
</evidence>
<evidence type="ECO:0007744" key="47">
    <source>
        <dbReference type="PDB" id="3BE1"/>
    </source>
</evidence>
<evidence type="ECO:0007744" key="48">
    <source>
        <dbReference type="PDB" id="3H3B"/>
    </source>
</evidence>
<evidence type="ECO:0007744" key="49">
    <source>
        <dbReference type="PDB" id="3MZW"/>
    </source>
</evidence>
<evidence type="ECO:0007744" key="50">
    <source>
        <dbReference type="PDB" id="3N85"/>
    </source>
</evidence>
<evidence type="ECO:0007744" key="51">
    <source>
        <dbReference type="PDB" id="3WLW"/>
    </source>
</evidence>
<evidence type="ECO:0007744" key="52">
    <source>
        <dbReference type="PDB" id="3WSQ"/>
    </source>
</evidence>
<evidence type="ECO:0007744" key="53">
    <source>
        <dbReference type="PDB" id="4HRL"/>
    </source>
</evidence>
<evidence type="ECO:0007744" key="54">
    <source>
        <dbReference type="PDB" id="4HRM"/>
    </source>
</evidence>
<evidence type="ECO:0007744" key="55">
    <source>
        <dbReference type="PDB" id="4HRN"/>
    </source>
</evidence>
<evidence type="ECO:0007744" key="56">
    <source>
    </source>
</evidence>
<evidence type="ECO:0007744" key="57">
    <source>
    </source>
</evidence>
<evidence type="ECO:0007744" key="58">
    <source>
    </source>
</evidence>
<evidence type="ECO:0007744" key="59">
    <source>
    </source>
</evidence>
<evidence type="ECO:0007744" key="60">
    <source>
    </source>
</evidence>
<evidence type="ECO:0007744" key="61">
    <source>
    </source>
</evidence>
<evidence type="ECO:0007744" key="62">
    <source>
    </source>
</evidence>
<evidence type="ECO:0007829" key="63">
    <source>
        <dbReference type="PDB" id="1MW4"/>
    </source>
</evidence>
<evidence type="ECO:0007829" key="64">
    <source>
        <dbReference type="PDB" id="1N8Z"/>
    </source>
</evidence>
<evidence type="ECO:0007829" key="65">
    <source>
        <dbReference type="PDB" id="2A91"/>
    </source>
</evidence>
<evidence type="ECO:0007829" key="66">
    <source>
        <dbReference type="PDB" id="2JWA"/>
    </source>
</evidence>
<evidence type="ECO:0007829" key="67">
    <source>
        <dbReference type="PDB" id="2N2A"/>
    </source>
</evidence>
<evidence type="ECO:0007829" key="68">
    <source>
        <dbReference type="PDB" id="3H3B"/>
    </source>
</evidence>
<evidence type="ECO:0007829" key="69">
    <source>
        <dbReference type="PDB" id="3N85"/>
    </source>
</evidence>
<evidence type="ECO:0007829" key="70">
    <source>
        <dbReference type="PDB" id="3PP0"/>
    </source>
</evidence>
<evidence type="ECO:0007829" key="71">
    <source>
        <dbReference type="PDB" id="3RCD"/>
    </source>
</evidence>
<evidence type="ECO:0007829" key="72">
    <source>
        <dbReference type="PDB" id="3WLW"/>
    </source>
</evidence>
<evidence type="ECO:0007829" key="73">
    <source>
        <dbReference type="PDB" id="3WSQ"/>
    </source>
</evidence>
<evidence type="ECO:0007829" key="74">
    <source>
        <dbReference type="PDB" id="5MY6"/>
    </source>
</evidence>
<evidence type="ECO:0007829" key="75">
    <source>
        <dbReference type="PDB" id="6J71"/>
    </source>
</evidence>
<evidence type="ECO:0007829" key="76">
    <source>
        <dbReference type="PDB" id="6LBX"/>
    </source>
</evidence>
<evidence type="ECO:0007829" key="77">
    <source>
        <dbReference type="PDB" id="8JYQ"/>
    </source>
</evidence>
<evidence type="ECO:0007829" key="78">
    <source>
        <dbReference type="PDB" id="8JYR"/>
    </source>
</evidence>
<evidence type="ECO:0007829" key="79">
    <source>
        <dbReference type="PDB" id="8PWH"/>
    </source>
</evidence>
<evidence type="ECO:0007829" key="80">
    <source>
        <dbReference type="PDB" id="8U8X"/>
    </source>
</evidence>
<evidence type="ECO:0007829" key="81">
    <source>
        <dbReference type="PDB" id="8VQD"/>
    </source>
</evidence>
<evidence type="ECO:0007829" key="82">
    <source>
        <dbReference type="PDB" id="8VQE"/>
    </source>
</evidence>
<proteinExistence type="evidence at protein level"/>
<comment type="function">
    <text evidence="42">Protein tyrosine kinase that is part of several cell surface receptor complexes, but that apparently needs a coreceptor for ligand binding. Essential component of a neuregulin-receptor complex, although neuregulins do not interact with it alone. GP30 is a potential ligand for this receptor. Regulates outgrowth and stabilization of peripheral microtubules (MTs). Upon ERBB2 activation, the MEMO1-RHOA-DIAPH1 signaling pathway elicits the phosphorylation and thus the inhibition of GSK3B at cell membrane. This prevents the phosphorylation of APC and CLASP2, allowing its association with the cell membrane. In turn, membrane-bound APC allows the localization of MACF1 to the cell membrane, which is required for microtubule capture and stabilization.</text>
</comment>
<comment type="function">
    <text evidence="7 14 28">In the nucleus is involved in transcriptional regulation. Associates with the 5'-TCAAATTC-3' sequence in the PTGS2/COX-2 promoter and activates its transcription. Implicated in transcriptional activation of CDKN1A; the function involves STAT3 and SRC. Involved in the transcription of rRNA genes by RNA Pol I and enhances protein synthesis and cell growth.</text>
</comment>
<comment type="catalytic activity">
    <reaction evidence="5 27">
        <text>L-tyrosyl-[protein] + ATP = O-phospho-L-tyrosyl-[protein] + ADP + H(+)</text>
        <dbReference type="Rhea" id="RHEA:10596"/>
        <dbReference type="Rhea" id="RHEA-COMP:10136"/>
        <dbReference type="Rhea" id="RHEA-COMP:20101"/>
        <dbReference type="ChEBI" id="CHEBI:15378"/>
        <dbReference type="ChEBI" id="CHEBI:30616"/>
        <dbReference type="ChEBI" id="CHEBI:46858"/>
        <dbReference type="ChEBI" id="CHEBI:61978"/>
        <dbReference type="ChEBI" id="CHEBI:456216"/>
        <dbReference type="EC" id="2.7.10.1"/>
    </reaction>
</comment>
<comment type="activity regulation">
    <text evidence="21 27">Activated by dimerization. Not activated by EGF, TGF-alpha and amphiregulin. Interaction with PTK6 increases its intrinsic kinase activity.</text>
</comment>
<comment type="subunit">
    <text evidence="2 7 8 9 10 11 12 13 16 18 21 23 26 27 28 29 32 33 36">Homodimer (PubMed:21454582). Heterodimer with EGFR, ERBB3 and ERBB4 (PubMed:10358079, PubMed:15093539, PubMed:16978839, PubMed:21190959). Part of a complex with EGFR and either PIK3C2A or PIK3C2B. May interact with PIK3C2B when phosphorylated on Tyr-1196 (PubMed:10805725). Interacts with PLXNB1 (PubMed:15210733). Interacts (when phosphorylated on Tyr-1248) with MEMO1 (PubMed:15156151). Interacts with MUC1; the interaction is enhanced by heregulin (HRG) (PubMed:12939402). Interacts (when phosphorylated on Tyr-1139) with GRB7 (via SH2 domain) (PubMed:12975581). Interacts (when phosphorylated on Tyr-1248) with ERBIN (PubMed:12444095). Interacts with KPNB1, RANBP2, EEA1, CRM1 and CLTC (PubMed:16314522). Interacts with PTK6 (PubMed:18719096). Interacts with RPA194 and ACTB (PubMed:21555369). Interacts with PRKCABP, SRC and MYOC (By similarity). Interacts (preferentially with the tyrosine phosphorylated form) with CPNE3; this interaction occurs at the cell membrane and is increased in a growth factor heregulin-dependent manner (PubMed:20010870). Interacts with HSP90AA1 and HSP90AB1 in an ATP-dependent manner; the interaction suppresses ERBB2 kinase activity (PubMed:26517842). Interacts with SORL1; this interaction regulates ERBB2 subcellular distribution by promoting its recycling after internalization from endosomes back to the plasma membrane, hence stimulates ERBB2-mediated signaling (PubMed:31138794). Interacts with SH3BGRL (PubMed:32381043). Interacts with ROR1 (PubMed:36949068).</text>
</comment>
<comment type="interaction">
    <interactant intactId="EBI-641062">
        <id>P04626</id>
    </interactant>
    <interactant intactId="EBI-375543">
        <id>P00519</id>
        <label>ABL1</label>
    </interactant>
    <organismsDiffer>false</organismsDiffer>
    <experiments>2</experiments>
</comment>
<comment type="interaction">
    <interactant intactId="EBI-641062">
        <id>P04626</id>
    </interactant>
    <interactant intactId="EBI-1102694">
        <id>P42684</id>
        <label>ABL2</label>
    </interactant>
    <organismsDiffer>false</organismsDiffer>
    <experiments>6</experiments>
</comment>
<comment type="interaction">
    <interactant intactId="EBI-641062">
        <id>P04626</id>
    </interactant>
    <interactant intactId="EBI-1222012">
        <id>P15309</id>
        <label>ACP3</label>
    </interactant>
    <organismsDiffer>false</organismsDiffer>
    <experiments>2</experiments>
</comment>
<comment type="interaction">
    <interactant intactId="EBI-641062">
        <id>P04626</id>
    </interactant>
    <interactant intactId="EBI-353944">
        <id>P60709</id>
        <label>ACTB</label>
    </interactant>
    <organismsDiffer>false</organismsDiffer>
    <experiments>10</experiments>
</comment>
<comment type="interaction">
    <interactant intactId="EBI-641062">
        <id>P04626</id>
    </interactant>
    <interactant intactId="EBI-1048612">
        <id>Q92625</id>
        <label>ANKS1A</label>
    </interactant>
    <organismsDiffer>false</organismsDiffer>
    <experiments>2</experiments>
</comment>
<comment type="interaction">
    <interactant intactId="EBI-641062">
        <id>P04626</id>
    </interactant>
    <interactant intactId="EBI-81694">
        <id>O00213</id>
        <label>APBB1</label>
    </interactant>
    <organismsDiffer>false</organismsDiffer>
    <experiments>2</experiments>
</comment>
<comment type="interaction">
    <interactant intactId="EBI-641062">
        <id>P04626</id>
    </interactant>
    <interactant intactId="EBI-702336">
        <id>O75815</id>
        <label>BCAR3</label>
    </interactant>
    <organismsDiffer>false</organismsDiffer>
    <experiments>2</experiments>
</comment>
<comment type="interaction">
    <interactant intactId="EBI-641062">
        <id>P04626</id>
    </interactant>
    <interactant intactId="EBI-1047302">
        <id>Q9HB71</id>
        <label>CACYBP</label>
    </interactant>
    <organismsDiffer>false</organismsDiffer>
    <experiments>2</experiments>
</comment>
<comment type="interaction">
    <interactant intactId="EBI-641062">
        <id>P04626</id>
    </interactant>
    <interactant intactId="EBI-295634">
        <id>Q16543</id>
        <label>CDC37</label>
    </interactant>
    <organismsDiffer>false</organismsDiffer>
    <experiments>5</experiments>
</comment>
<comment type="interaction">
    <interactant intactId="EBI-641062">
        <id>P04626</id>
    </interactant>
    <interactant intactId="EBI-617866">
        <id>Q9NSE2</id>
        <label>CISH</label>
    </interactant>
    <organismsDiffer>false</organismsDiffer>
    <experiments>4</experiments>
</comment>
<comment type="interaction">
    <interactant intactId="EBI-641062">
        <id>P04626</id>
    </interactant>
    <interactant intactId="EBI-7878194">
        <id>Q7Z7G1</id>
        <label>CLNK</label>
    </interactant>
    <organismsDiffer>false</organismsDiffer>
    <experiments>2</experiments>
</comment>
<comment type="interaction">
    <interactant intactId="EBI-641062">
        <id>P04626</id>
    </interactant>
    <interactant intactId="EBI-910">
        <id>P46109</id>
        <label>CRKL</label>
    </interactant>
    <organismsDiffer>false</organismsDiffer>
    <experiments>2</experiments>
</comment>
<comment type="interaction">
    <interactant intactId="EBI-641062">
        <id>P04626</id>
    </interactant>
    <interactant intactId="EBI-1057139">
        <id>Q93034</id>
        <label>CUL5</label>
    </interactant>
    <organismsDiffer>false</organismsDiffer>
    <experiments>2</experiments>
</comment>
<comment type="interaction">
    <interactant intactId="EBI-641062">
        <id>P04626</id>
    </interactant>
    <interactant intactId="EBI-1384360">
        <id>Q99704</id>
        <label>DOK1</label>
    </interactant>
    <organismsDiffer>false</organismsDiffer>
    <experiments>2</experiments>
</comment>
<comment type="interaction">
    <interactant intactId="EBI-641062">
        <id>P04626</id>
    </interactant>
    <interactant intactId="EBI-6918542">
        <id>Q8TEW6</id>
        <label>DOK4</label>
    </interactant>
    <organismsDiffer>false</organismsDiffer>
    <experiments>2</experiments>
</comment>
<comment type="interaction">
    <interactant intactId="EBI-641062">
        <id>P04626</id>
    </interactant>
    <interactant intactId="EBI-298113">
        <id>Q15075</id>
        <label>EEA1</label>
    </interactant>
    <organismsDiffer>false</organismsDiffer>
    <experiments>5</experiments>
</comment>
<comment type="interaction">
    <interactant intactId="EBI-641062">
        <id>P04626</id>
    </interactant>
    <interactant intactId="EBI-538287">
        <id>P98172</id>
        <label>EFNB1</label>
    </interactant>
    <organismsDiffer>false</organismsDiffer>
    <experiments>12</experiments>
</comment>
<comment type="interaction">
    <interactant intactId="EBI-641062">
        <id>P04626</id>
    </interactant>
    <interactant intactId="EBI-297353">
        <id>P00533</id>
        <label>EGFR</label>
    </interactant>
    <organismsDiffer>false</organismsDiffer>
    <experiments>25</experiments>
</comment>
<comment type="interaction">
    <interactant intactId="EBI-641062">
        <id>P04626</id>
    </interactant>
    <interactant intactId="EBI-641062">
        <id>P04626</id>
        <label>ERBB2</label>
    </interactant>
    <organismsDiffer>false</organismsDiffer>
    <experiments>12</experiments>
</comment>
<comment type="interaction">
    <interactant intactId="EBI-641062">
        <id>P04626</id>
    </interactant>
    <interactant intactId="EBI-720706">
        <id>P21860</id>
        <label>ERBB3</label>
    </interactant>
    <organismsDiffer>false</organismsDiffer>
    <experiments>30</experiments>
</comment>
<comment type="interaction">
    <interactant intactId="EBI-641062">
        <id>P04626</id>
    </interactant>
    <interactant intactId="EBI-80371">
        <id>Q15303</id>
        <label>ERBB4</label>
    </interactant>
    <organismsDiffer>false</organismsDiffer>
    <experiments>5</experiments>
</comment>
<comment type="interaction">
    <interactant intactId="EBI-641062">
        <id>P04626</id>
    </interactant>
    <interactant intactId="EBI-2941912">
        <id>Q9UJM3</id>
        <label>ERRFI1</label>
    </interactant>
    <organismsDiffer>false</organismsDiffer>
    <experiments>4</experiments>
</comment>
<comment type="interaction">
    <interactant intactId="EBI-641062">
        <id>P04626</id>
    </interactant>
    <interactant intactId="EBI-1383732">
        <id>P09769</id>
        <label>FGR</label>
    </interactant>
    <organismsDiffer>false</organismsDiffer>
    <experiments>3</experiments>
</comment>
<comment type="interaction">
    <interactant intactId="EBI-641062">
        <id>P04626</id>
    </interactant>
    <interactant intactId="EBI-515315">
        <id>P06241</id>
        <label>FYN</label>
    </interactant>
    <organismsDiffer>false</organismsDiffer>
    <experiments>2</experiments>
</comment>
<comment type="interaction">
    <interactant intactId="EBI-641062">
        <id>P04626</id>
    </interactant>
    <interactant intactId="EBI-740418">
        <id>O75791</id>
        <label>GRAP2</label>
    </interactant>
    <organismsDiffer>false</organismsDiffer>
    <experiments>2</experiments>
</comment>
<comment type="interaction">
    <interactant intactId="EBI-641062">
        <id>P04626</id>
    </interactant>
    <interactant intactId="EBI-401755">
        <id>P62993</id>
        <label>GRB2</label>
    </interactant>
    <organismsDiffer>false</organismsDiffer>
    <experiments>7</experiments>
</comment>
<comment type="interaction">
    <interactant intactId="EBI-641062">
        <id>P04626</id>
    </interactant>
    <interactant intactId="EBI-970191">
        <id>Q14451</id>
        <label>GRB7</label>
    </interactant>
    <organismsDiffer>false</organismsDiffer>
    <experiments>5</experiments>
</comment>
<comment type="interaction">
    <interactant intactId="EBI-641062">
        <id>P04626</id>
    </interactant>
    <interactant intactId="EBI-296047">
        <id>P07900</id>
        <label>HSP90AA1</label>
    </interactant>
    <organismsDiffer>false</organismsDiffer>
    <experiments>6</experiments>
</comment>
<comment type="interaction">
    <interactant intactId="EBI-641062">
        <id>P04626</id>
    </interactant>
    <interactant intactId="EBI-352572">
        <id>P08238</id>
        <label>HSP90AB1</label>
    </interactant>
    <organismsDiffer>false</organismsDiffer>
    <experiments>5</experiments>
</comment>
<comment type="interaction">
    <interactant intactId="EBI-641062">
        <id>P04626</id>
    </interactant>
    <interactant intactId="EBI-359129">
        <id>P14625</id>
        <label>HSP90B1</label>
    </interactant>
    <organismsDiffer>false</organismsDiffer>
    <experiments>2</experiments>
</comment>
<comment type="interaction">
    <interactant intactId="EBI-641062">
        <id>P04626</id>
    </interactant>
    <interactant intactId="EBI-354921">
        <id>P11021</id>
        <label>HSPA5</label>
    </interactant>
    <organismsDiffer>false</organismsDiffer>
    <experiments>3</experiments>
</comment>
<comment type="interaction">
    <interactant intactId="EBI-641062">
        <id>P04626</id>
    </interactant>
    <interactant intactId="EBI-297509">
        <id>P46940</id>
        <label>IQGAP1</label>
    </interactant>
    <organismsDiffer>false</organismsDiffer>
    <experiments>5</experiments>
</comment>
<comment type="interaction">
    <interactant intactId="EBI-641062">
        <id>P04626</id>
    </interactant>
    <interactant intactId="EBI-517592">
        <id>P35568</id>
        <label>IRS1</label>
    </interactant>
    <organismsDiffer>false</organismsDiffer>
    <experiments>2</experiments>
</comment>
<comment type="interaction">
    <interactant intactId="EBI-641062">
        <id>P04626</id>
    </interactant>
    <interactant intactId="EBI-968552">
        <id>Q08881</id>
        <label>ITK</label>
    </interactant>
    <organismsDiffer>false</organismsDiffer>
    <experiments>2</experiments>
</comment>
<comment type="interaction">
    <interactant intactId="EBI-641062">
        <id>P04626</id>
    </interactant>
    <interactant intactId="EBI-1383438">
        <id>P23458</id>
        <label>JAK1</label>
    </interactant>
    <organismsDiffer>false</organismsDiffer>
    <experiments>2</experiments>
</comment>
<comment type="interaction">
    <interactant intactId="EBI-641062">
        <id>P04626</id>
    </interactant>
    <interactant intactId="EBI-286758">
        <id>Q14974</id>
        <label>KPNB1</label>
    </interactant>
    <organismsDiffer>false</organismsDiffer>
    <experiments>14</experiments>
</comment>
<comment type="interaction">
    <interactant intactId="EBI-641062">
        <id>P04626</id>
    </interactant>
    <interactant intactId="EBI-2865191">
        <id>Q96JA1</id>
        <label>LRIG1</label>
    </interactant>
    <organismsDiffer>false</organismsDiffer>
    <experiments>7</experiments>
</comment>
<comment type="interaction">
    <interactant intactId="EBI-641062">
        <id>P04626</id>
    </interactant>
    <interactant intactId="EBI-2868511">
        <id>O75367</id>
        <label>MACROH2A1</label>
    </interactant>
    <organismsDiffer>false</organismsDiffer>
    <experiments>6</experiments>
</comment>
<comment type="interaction">
    <interactant intactId="EBI-641062">
        <id>P04626</id>
    </interactant>
    <interactant intactId="EBI-6250866">
        <id>O75367-3</id>
        <label>MACROH2A1</label>
    </interactant>
    <organismsDiffer>false</organismsDiffer>
    <experiments>3</experiments>
</comment>
<comment type="interaction">
    <interactant intactId="EBI-641062">
        <id>P04626</id>
    </interactant>
    <interactant intactId="EBI-78404">
        <id>Q9UQF2</id>
        <label>MAPK8IP1</label>
    </interactant>
    <organismsDiffer>false</organismsDiffer>
    <experiments>4</experiments>
</comment>
<comment type="interaction">
    <interactant intactId="EBI-641062">
        <id>P04626</id>
    </interactant>
    <interactant intactId="EBI-722813">
        <id>Q13387</id>
        <label>MAPK8IP2</label>
    </interactant>
    <organismsDiffer>false</organismsDiffer>
    <experiments>3</experiments>
</comment>
<comment type="interaction">
    <interactant intactId="EBI-641062">
        <id>P04626</id>
    </interactant>
    <interactant intactId="EBI-751664">
        <id>P42679</id>
        <label>MATK</label>
    </interactant>
    <organismsDiffer>false</organismsDiffer>
    <experiments>2</experiments>
</comment>
<comment type="interaction">
    <interactant intactId="EBI-641062">
        <id>P04626</id>
    </interactant>
    <interactant intactId="EBI-1104564">
        <id>Q9Y316</id>
        <label>MEMO1</label>
    </interactant>
    <organismsDiffer>false</organismsDiffer>
    <experiments>6</experiments>
</comment>
<comment type="interaction">
    <interactant intactId="EBI-641062">
        <id>P04626</id>
    </interactant>
    <interactant intactId="EBI-713635">
        <id>O43639</id>
        <label>NCK2</label>
    </interactant>
    <organismsDiffer>false</organismsDiffer>
    <experiments>2</experiments>
</comment>
<comment type="interaction">
    <interactant intactId="EBI-641062">
        <id>P04626</id>
    </interactant>
    <interactant intactId="EBI-2460927">
        <id>Q02297-7</id>
        <label>NRG1</label>
    </interactant>
    <organismsDiffer>false</organismsDiffer>
    <experiments>2</experiments>
</comment>
<comment type="interaction">
    <interactant intactId="EBI-641062">
        <id>P04626</id>
    </interactant>
    <interactant intactId="EBI-641107">
        <id>O00750</id>
        <label>PIK3C2B</label>
    </interactant>
    <organismsDiffer>false</organismsDiffer>
    <experiments>2</experiments>
</comment>
<comment type="interaction">
    <interactant intactId="EBI-641062">
        <id>P04626</id>
    </interactant>
    <interactant intactId="EBI-79464">
        <id>P27986</id>
        <label>PIK3R1</label>
    </interactant>
    <organismsDiffer>false</organismsDiffer>
    <experiments>12</experiments>
</comment>
<comment type="interaction">
    <interactant intactId="EBI-641062">
        <id>P04626</id>
    </interactant>
    <interactant intactId="EBI-346930">
        <id>O00459</id>
        <label>PIK3R2</label>
    </interactant>
    <organismsDiffer>false</organismsDiffer>
    <experiments>7</experiments>
</comment>
<comment type="interaction">
    <interactant intactId="EBI-641062">
        <id>P04626</id>
    </interactant>
    <interactant intactId="EBI-79893">
        <id>Q92569</id>
        <label>PIK3R3</label>
    </interactant>
    <organismsDiffer>false</organismsDiffer>
    <experiments>10</experiments>
</comment>
<comment type="interaction">
    <interactant intactId="EBI-641062">
        <id>P04626</id>
    </interactant>
    <interactant intactId="EBI-79387">
        <id>P19174</id>
        <label>PLCG1</label>
    </interactant>
    <organismsDiffer>false</organismsDiffer>
    <experiments>5</experiments>
</comment>
<comment type="interaction">
    <interactant intactId="EBI-641062">
        <id>P04626</id>
    </interactant>
    <interactant intactId="EBI-617403">
        <id>P16885</id>
        <label>PLCG2</label>
    </interactant>
    <organismsDiffer>false</organismsDiffer>
    <experiments>3</experiments>
</comment>
<comment type="interaction">
    <interactant intactId="EBI-641062">
        <id>P04626</id>
    </interactant>
    <interactant intactId="EBI-359472">
        <id>O95602</id>
        <label>POLR1A</label>
    </interactant>
    <organismsDiffer>false</organismsDiffer>
    <experiments>16</experiments>
</comment>
<comment type="interaction">
    <interactant intactId="EBI-641062">
        <id>P04626</id>
    </interactant>
    <interactant intactId="EBI-1383632">
        <id>Q13882</id>
        <label>PTK6</label>
    </interactant>
    <organismsDiffer>false</organismsDiffer>
    <experiments>4</experiments>
</comment>
<comment type="interaction">
    <interactant intactId="EBI-641062">
        <id>P04626</id>
    </interactant>
    <interactant intactId="EBI-297779">
        <id>Q06124</id>
        <label>PTPN11</label>
    </interactant>
    <organismsDiffer>false</organismsDiffer>
    <experiments>3</experiments>
</comment>
<comment type="interaction">
    <interactant intactId="EBI-641062">
        <id>P04626</id>
    </interactant>
    <interactant intactId="EBI-2266035">
        <id>Q05209</id>
        <label>PTPN12</label>
    </interactant>
    <organismsDiffer>false</organismsDiffer>
    <experiments>4</experiments>
</comment>
<comment type="interaction">
    <interactant intactId="EBI-641062">
        <id>P04626</id>
    </interactant>
    <interactant intactId="EBI-1384210">
        <id>Q99952</id>
        <label>PTPN18</label>
    </interactant>
    <organismsDiffer>false</organismsDiffer>
    <experiments>6</experiments>
</comment>
<comment type="interaction">
    <interactant intactId="EBI-641062">
        <id>P04626</id>
    </interactant>
    <interactant intactId="EBI-12739708">
        <id>Q99952-1</id>
        <label>PTPN18</label>
    </interactant>
    <organismsDiffer>false</organismsDiffer>
    <experiments>5</experiments>
</comment>
<comment type="interaction">
    <interactant intactId="EBI-641062">
        <id>P04626</id>
    </interactant>
    <interactant intactId="EBI-1265766">
        <id>P23467</id>
        <label>PTPRB</label>
    </interactant>
    <organismsDiffer>false</organismsDiffer>
    <experiments>2</experiments>
</comment>
<comment type="interaction">
    <interactant intactId="EBI-641062">
        <id>P04626</id>
    </interactant>
    <interactant intactId="EBI-1341">
        <id>P08575</id>
        <label>PTPRC</label>
    </interactant>
    <organismsDiffer>false</organismsDiffer>
    <experiments>2</experiments>
</comment>
<comment type="interaction">
    <interactant intactId="EBI-641062">
        <id>P04626</id>
    </interactant>
    <interactant intactId="EBI-2264500">
        <id>Q12913</id>
        <label>PTPRJ</label>
    </interactant>
    <organismsDiffer>false</organismsDiffer>
    <experiments>2</experiments>
</comment>
<comment type="interaction">
    <interactant intactId="EBI-641062">
        <id>P04626</id>
    </interactant>
    <interactant intactId="EBI-474052">
        <id>Q15262</id>
        <label>PTPRK</label>
    </interactant>
    <organismsDiffer>false</organismsDiffer>
    <experiments>2</experiments>
</comment>
<comment type="interaction">
    <interactant intactId="EBI-641062">
        <id>P04626</id>
    </interactant>
    <interactant intactId="EBI-723739">
        <id>Q16827</id>
        <label>PTPRO</label>
    </interactant>
    <organismsDiffer>false</organismsDiffer>
    <experiments>2</experiments>
</comment>
<comment type="interaction">
    <interactant intactId="EBI-641062">
        <id>P04626</id>
    </interactant>
    <interactant intactId="EBI-2265659">
        <id>Q15256</id>
        <label>PTPRR</label>
    </interactant>
    <organismsDiffer>false</organismsDiffer>
    <experiments>2</experiments>
</comment>
<comment type="interaction">
    <interactant intactId="EBI-641062">
        <id>P04626</id>
    </interactant>
    <interactant intactId="EBI-973138">
        <id>P49792</id>
        <label>RANBP2</label>
    </interactant>
    <organismsDiffer>false</organismsDiffer>
    <experiments>3</experiments>
</comment>
<comment type="interaction">
    <interactant intactId="EBI-641062">
        <id>P04626</id>
    </interactant>
    <interactant intactId="EBI-1026476">
        <id>P20936</id>
        <label>RASA1</label>
    </interactant>
    <organismsDiffer>false</organismsDiffer>
    <experiments>8</experiments>
</comment>
<comment type="interaction">
    <interactant intactId="EBI-641062">
        <id>P04626</id>
    </interactant>
    <interactant intactId="EBI-2823742">
        <id>O95980</id>
        <label>RECK</label>
    </interactant>
    <organismsDiffer>false</organismsDiffer>
    <experiments>4</experiments>
</comment>
<comment type="interaction">
    <interactant intactId="EBI-641062">
        <id>P04626</id>
    </interactant>
    <interactant intactId="EBI-490630">
        <id>Q9NP31</id>
        <label>SH2D2A</label>
    </interactant>
    <organismsDiffer>false</organismsDiffer>
    <experiments>2</experiments>
</comment>
<comment type="interaction">
    <interactant intactId="EBI-641062">
        <id>P04626</id>
    </interactant>
    <interactant intactId="EBI-78835">
        <id>P29353</id>
        <label>SHC1</label>
    </interactant>
    <organismsDiffer>false</organismsDiffer>
    <experiments>11</experiments>
</comment>
<comment type="interaction">
    <interactant intactId="EBI-641062">
        <id>P04626</id>
    </interactant>
    <interactant intactId="EBI-7256023">
        <id>P98077</id>
        <label>SHC2</label>
    </interactant>
    <organismsDiffer>false</organismsDiffer>
    <experiments>3</experiments>
</comment>
<comment type="interaction">
    <interactant intactId="EBI-641062">
        <id>P04626</id>
    </interactant>
    <interactant intactId="EBI-79084">
        <id>Q92529</id>
        <label>SHC3</label>
    </interactant>
    <organismsDiffer>false</organismsDiffer>
    <experiments>2</experiments>
</comment>
<comment type="interaction">
    <interactant intactId="EBI-641062">
        <id>P04626</id>
    </interactant>
    <interactant intactId="EBI-1222854">
        <id>Q9H6Q3</id>
        <label>SLA2</label>
    </interactant>
    <organismsDiffer>false</organismsDiffer>
    <experiments>2</experiments>
</comment>
<comment type="interaction">
    <interactant intactId="EBI-641062">
        <id>P04626</id>
    </interactant>
    <interactant intactId="EBI-968198">
        <id>O15524</id>
        <label>SOCS1</label>
    </interactant>
    <organismsDiffer>false</organismsDiffer>
    <experiments>2</experiments>
</comment>
<comment type="interaction">
    <interactant intactId="EBI-641062">
        <id>P04626</id>
    </interactant>
    <interactant intactId="EBI-621482">
        <id>P12931</id>
        <label>SRC</label>
    </interactant>
    <organismsDiffer>false</organismsDiffer>
    <experiments>11</experiments>
</comment>
<comment type="interaction">
    <interactant intactId="EBI-641062">
        <id>P04626</id>
    </interactant>
    <interactant intactId="EBI-1057697">
        <id>P42224</id>
        <label>STAT1</label>
    </interactant>
    <organismsDiffer>false</organismsDiffer>
    <experiments>3</experiments>
</comment>
<comment type="interaction">
    <interactant intactId="EBI-641062">
        <id>P04626</id>
    </interactant>
    <interactant intactId="EBI-518675">
        <id>P40763</id>
        <label>STAT3</label>
    </interactant>
    <organismsDiffer>false</organismsDiffer>
    <experiments>9</experiments>
</comment>
<comment type="interaction">
    <interactant intactId="EBI-641062">
        <id>P04626</id>
    </interactant>
    <interactant intactId="EBI-1054052">
        <id>P31948</id>
        <label>STIP1</label>
    </interactant>
    <organismsDiffer>false</organismsDiffer>
    <experiments>2</experiments>
</comment>
<comment type="interaction">
    <interactant intactId="EBI-641062">
        <id>P04626</id>
    </interactant>
    <interactant intactId="EBI-2515547">
        <id>Q7KZ85</id>
        <label>SUPT6H</label>
    </interactant>
    <organismsDiffer>false</organismsDiffer>
    <experiments>2</experiments>
</comment>
<comment type="interaction">
    <interactant intactId="EBI-641062">
        <id>P04626</id>
    </interactant>
    <interactant intactId="EBI-78302">
        <id>P43405</id>
        <label>SYK</label>
    </interactant>
    <organismsDiffer>false</organismsDiffer>
    <experiments>7</experiments>
</comment>
<comment type="interaction">
    <interactant intactId="EBI-641062">
        <id>P04626</id>
    </interactant>
    <interactant intactId="EBI-2462036">
        <id>Q9Y490</id>
        <label>TLN1</label>
    </interactant>
    <organismsDiffer>false</organismsDiffer>
    <experiments>3</experiments>
</comment>
<comment type="interaction">
    <interactant intactId="EBI-641062">
        <id>P04626</id>
    </interactant>
    <interactant intactId="EBI-949753">
        <id>Q63HR2</id>
        <label>TNS2</label>
    </interactant>
    <organismsDiffer>false</organismsDiffer>
    <experiments>4</experiments>
</comment>
<comment type="interaction">
    <interactant intactId="EBI-641062">
        <id>P04626</id>
    </interactant>
    <interactant intactId="EBI-1220488">
        <id>Q68CZ2</id>
        <label>TNS3</label>
    </interactant>
    <organismsDiffer>false</organismsDiffer>
    <experiments>2</experiments>
</comment>
<comment type="interaction">
    <interactant intactId="EBI-641062">
        <id>P04626</id>
    </interactant>
    <interactant intactId="EBI-7875353">
        <id>Q96D37</id>
        <label>VAV1</label>
    </interactant>
    <organismsDiffer>false</organismsDiffer>
    <experiments>2</experiments>
</comment>
<comment type="interaction">
    <interactant intactId="EBI-641062">
        <id>P04626</id>
    </interactant>
    <interactant intactId="EBI-297549">
        <id>P52735</id>
        <label>VAV2</label>
    </interactant>
    <organismsDiffer>false</organismsDiffer>
    <experiments>3</experiments>
</comment>
<comment type="interaction">
    <interactant intactId="EBI-641062">
        <id>P04626</id>
    </interactant>
    <interactant intactId="EBI-355867">
        <id>O14980</id>
        <label>XPO1</label>
    </interactant>
    <organismsDiffer>false</organismsDiffer>
    <experiments>3</experiments>
</comment>
<comment type="interaction">
    <interactant intactId="EBI-641062">
        <id>P04626</id>
    </interactant>
    <interactant intactId="EBI-356498">
        <id>P62258</id>
        <label>YWHAE</label>
    </interactant>
    <organismsDiffer>false</organismsDiffer>
    <experiments>2</experiments>
</comment>
<comment type="subcellular location">
    <subcellularLocation>
        <location evidence="33">Cell membrane</location>
        <topology evidence="3">Single-pass type I membrane protein</topology>
    </subcellularLocation>
    <subcellularLocation>
        <location evidence="35">Cell projection</location>
        <location evidence="35">Ruffle membrane</location>
        <topology evidence="3">Single-pass type I membrane protein</topology>
    </subcellularLocation>
    <text evidence="33">Internalized from the cell membrane in response to EGF stimulation.</text>
</comment>
<comment type="subcellular location">
    <molecule>Isoform 1</molecule>
    <subcellularLocation>
        <location evidence="32 34">Cell membrane</location>
        <topology evidence="3">Single-pass type I membrane protein</topology>
    </subcellularLocation>
    <subcellularLocation>
        <location evidence="32">Early endosome</location>
    </subcellularLocation>
    <subcellularLocation>
        <location>Cytoplasm</location>
        <location>Perinuclear region</location>
    </subcellularLocation>
    <subcellularLocation>
        <location>Nucleus</location>
    </subcellularLocation>
    <text evidence="32">Translocation to the nucleus requires endocytosis, probably endosomal sorting and is mediated by importin beta-1/KPNB1. Also detected in VPS35-positive endosome-to-TGN retrograde vesicles (PubMed:31138794).</text>
</comment>
<comment type="subcellular location">
    <molecule>Isoform 2</molecule>
    <subcellularLocation>
        <location>Cytoplasm</location>
    </subcellularLocation>
    <subcellularLocation>
        <location>Nucleus</location>
    </subcellularLocation>
</comment>
<comment type="subcellular location">
    <molecule>Isoform 3</molecule>
    <subcellularLocation>
        <location>Cytoplasm</location>
    </subcellularLocation>
    <subcellularLocation>
        <location>Nucleus</location>
    </subcellularLocation>
</comment>
<comment type="alternative products">
    <event type="alternative splicing"/>
    <event type="alternative initiation"/>
    <isoform>
        <id>P04626-1</id>
        <name>1</name>
        <name>ERBB2</name>
        <name>HER2</name>
        <sequence type="displayed"/>
    </isoform>
    <isoform>
        <id>P04626-2</id>
        <name>2</name>
        <name>CTF-611</name>
        <sequence type="described" ref="VSP_039249"/>
    </isoform>
    <isoform>
        <id>P04626-3</id>
        <name>3</name>
        <name>CTF-687</name>
        <sequence type="described" ref="VSP_039250"/>
    </isoform>
    <isoform>
        <id>P04626-4</id>
        <name>4</name>
        <sequence type="described" ref="VSP_039248"/>
    </isoform>
    <isoform>
        <id>P04626-5</id>
        <name>5</name>
        <sequence type="described" ref="VSP_054787"/>
    </isoform>
    <isoform>
        <id>P04626-6</id>
        <name>6</name>
        <name>B</name>
        <sequence type="described" ref="VSP_055902 VSP_055903 VSP_055904"/>
    </isoform>
</comment>
<comment type="tissue specificity">
    <text evidence="14">Expressed in a variety of tumor tissues including primary breast tumors and tumors from small bowel, esophagus, kidney and mouth.</text>
</comment>
<comment type="PTM">
    <text evidence="20 30 34 42">Autophosphorylated. Autophosphorylation occurs in trans, i.e. one subunit of the dimeric receptor phosphorylates tyrosine residues on the other subunit (Probable). Ligand-binding increases phosphorylation on tyrosine residues (PubMed:27134172, PubMed:33497358). Signaling via SEMA4C promotes phosphorylation at Tyr-1248 (PubMed:17554007). Dephosphorylated by PTPN12 (PubMed:27134172).</text>
</comment>
<comment type="polymorphism">
    <text>There are four alleles due to the variations in positions 654 and 655. Allele B1 (Ile-654/Ile-655) has a frequency of 0.782; allele B2 (Ile-654/Val-655) has a frequency of 0.206; allele B3 (Val-654/Val-655) has a frequency of 0.012.</text>
</comment>
<comment type="disease" evidence="15">
    <disease id="DI-02566">
        <name>Glioma</name>
        <acronym>GLM</acronym>
        <description>Gliomas are benign or malignant central nervous system neoplasms derived from glial cells. They comprise astrocytomas and glioblastoma multiforme that are derived from astrocytes, oligodendrogliomas derived from oligodendrocytes and ependymomas derived from ependymocytes.</description>
        <dbReference type="MIM" id="137800"/>
    </disease>
    <text>The gene represented in this entry is involved in disease pathogenesis.</text>
</comment>
<comment type="disease" evidence="15 19">
    <disease id="DI-01655">
        <name>Ovarian cancer</name>
        <acronym>OC</acronym>
        <description>The term ovarian cancer defines malignancies originating from ovarian tissue. Although many histologic types of ovarian tumors have been described, epithelial ovarian carcinoma is the most common form. Ovarian cancers are often asymptomatic and the recognized signs and symptoms, even of late-stage disease, are vague. Consequently, most patients are diagnosed with advanced disease.</description>
        <dbReference type="MIM" id="167000"/>
    </disease>
    <text>The gene represented in this entry is involved in disease pathogenesis.</text>
</comment>
<comment type="disease" evidence="15">
    <disease id="DI-02205">
        <name>Lung cancer</name>
        <acronym>LNCR</acronym>
        <description>A common malignancy affecting tissues of the lung. The most common form of lung cancer is non-small cell lung cancer (NSCLC) that can be divided into 3 major histologic subtypes: squamous cell carcinoma, adenocarcinoma, and large cell lung cancer. NSCLC is often diagnosed at an advanced stage and has a poor prognosis.</description>
        <dbReference type="MIM" id="211980"/>
    </disease>
    <text>The gene represented in this entry is involved in disease pathogenesis.</text>
</comment>
<comment type="disease" evidence="15 19">
    <disease id="DI-02971">
        <name>Gastric cancer</name>
        <acronym>GASC</acronym>
        <description>A malignant disease which starts in the stomach, can spread to the esophagus or the small intestine, and can extend through the stomach wall to nearby lymph nodes and organs. It also can metastasize to other parts of the body. The term gastric cancer or gastric carcinoma refers to adenocarcinoma of the stomach that accounts for most of all gastric malignant tumors. Two main histologic types are recognized, diffuse type and intestinal type carcinomas. Diffuse tumors are poorly differentiated infiltrating lesions, resulting in thickening of the stomach. In contrast, intestinal tumors are usually exophytic, often ulcerating, and associated with intestinal metaplasia of the stomach, most often observed in sporadic disease.</description>
        <dbReference type="MIM" id="613659"/>
    </disease>
    <text>The protein represented in this entry is involved in disease pathogenesis.</text>
</comment>
<comment type="disease">
    <text evidence="25">Chromosomal aberrations involving ERBB2 may be a cause gastric cancer. Deletions within 17q12 region producing fusion transcripts with CDK12, leading to CDK12-ERBB2 fusion leading to truncated CDK12 protein not in-frame with ERBB2.</text>
</comment>
<comment type="disease" evidence="34">
    <disease id="DI-06182">
        <name>Visceral neuropathy, familial, 2, autosomal recessive</name>
        <acronym>VSCN2</acronym>
        <description>An autosomal recessive disorder characterized by intestinal dysmotility due to aganglionosis (Hirschsprung disease), hypoganglionosis, and/or chronic intestinal pseudoobstruction. Patients also show peripheral axonal neuropathy, hypotonia, mild developmental delay, unilateral ptosis, and sensorineural hearing loss.</description>
        <dbReference type="MIM" id="619465"/>
    </disease>
    <text>The disease is caused by variants affecting the gene represented in this entry.</text>
</comment>
<comment type="miscellaneous">
    <molecule>Isoform 2</molecule>
    <text evidence="42">Produced by alternative initiation at Met-611 of isoform 1.</text>
</comment>
<comment type="miscellaneous">
    <molecule>Isoform 3</molecule>
    <text evidence="42">Produced by alternative initiation at Met-687 of isoform 1.</text>
</comment>
<comment type="miscellaneous">
    <molecule>Isoform 4</molecule>
    <text evidence="42">Produced by alternative splicing of isoform 1.</text>
</comment>
<comment type="similarity">
    <text evidence="4">Belongs to the protein kinase superfamily. Tyr protein kinase family. EGF receptor subfamily.</text>
</comment>
<comment type="online information" name="Atlas of Genetics and Cytogenetics in Oncology and Haematology">
    <link uri="https://atlasgeneticsoncology.org/gene/162/ERBB2"/>
</comment>
<comment type="online information" name="Wikipedia">
    <link uri="https://en.wikipedia.org/wiki/ERBB2"/>
    <text>ERBB2 entry</text>
</comment>